<dbReference type="EC" id="3.6.4.-"/>
<dbReference type="EMBL" id="J04977">
    <property type="protein sequence ID" value="AAA59475.1"/>
    <property type="molecule type" value="mRNA"/>
</dbReference>
<dbReference type="EMBL" id="M30938">
    <property type="protein sequence ID" value="AAA36154.1"/>
    <property type="molecule type" value="mRNA"/>
</dbReference>
<dbReference type="EMBL" id="AK290740">
    <property type="protein sequence ID" value="BAF83429.1"/>
    <property type="molecule type" value="mRNA"/>
</dbReference>
<dbReference type="EMBL" id="AK222603">
    <property type="protein sequence ID" value="BAD96323.1"/>
    <property type="molecule type" value="mRNA"/>
</dbReference>
<dbReference type="EMBL" id="DQ787434">
    <property type="protein sequence ID" value="ABG46942.1"/>
    <property type="molecule type" value="Genomic_DNA"/>
</dbReference>
<dbReference type="EMBL" id="CH471063">
    <property type="protein sequence ID" value="EAW70562.1"/>
    <property type="molecule type" value="Genomic_DNA"/>
</dbReference>
<dbReference type="EMBL" id="BC019027">
    <property type="protein sequence ID" value="AAH19027.1"/>
    <property type="molecule type" value="mRNA"/>
</dbReference>
<dbReference type="EMBL" id="BC095442">
    <property type="protein sequence ID" value="AAH95442.1"/>
    <property type="molecule type" value="mRNA"/>
</dbReference>
<dbReference type="EMBL" id="X57500">
    <property type="protein sequence ID" value="CAA40736.1"/>
    <property type="molecule type" value="mRNA"/>
</dbReference>
<dbReference type="CCDS" id="CCDS2402.1"/>
<dbReference type="PIR" id="A35051">
    <property type="entry name" value="A32626"/>
</dbReference>
<dbReference type="PIR" id="D42397">
    <property type="entry name" value="D42397"/>
</dbReference>
<dbReference type="PIR" id="S62889">
    <property type="entry name" value="S62889"/>
</dbReference>
<dbReference type="RefSeq" id="NP_066964.1">
    <property type="nucleotide sequence ID" value="NM_021141.4"/>
</dbReference>
<dbReference type="PDB" id="1JEQ">
    <property type="method" value="X-ray"/>
    <property type="resolution" value="2.70 A"/>
    <property type="chains" value="B=1-565"/>
</dbReference>
<dbReference type="PDB" id="1JEY">
    <property type="method" value="X-ray"/>
    <property type="resolution" value="2.50 A"/>
    <property type="chains" value="B=1-565"/>
</dbReference>
<dbReference type="PDB" id="1Q2Z">
    <property type="method" value="NMR"/>
    <property type="chains" value="A=590-709"/>
</dbReference>
<dbReference type="PDB" id="1RW2">
    <property type="method" value="NMR"/>
    <property type="chains" value="A=566-710"/>
</dbReference>
<dbReference type="PDB" id="3RZ9">
    <property type="method" value="X-ray"/>
    <property type="resolution" value="2.29 A"/>
    <property type="chains" value="B=559-571"/>
</dbReference>
<dbReference type="PDB" id="5Y3R">
    <property type="method" value="EM"/>
    <property type="resolution" value="6.60 A"/>
    <property type="chains" value="B=6-541"/>
</dbReference>
<dbReference type="PDB" id="6ERF">
    <property type="method" value="X-ray"/>
    <property type="resolution" value="3.01 A"/>
    <property type="chains" value="B/D/F/H=2-555"/>
</dbReference>
<dbReference type="PDB" id="6ERG">
    <property type="method" value="X-ray"/>
    <property type="resolution" value="2.90 A"/>
    <property type="chains" value="B/E=2-555"/>
</dbReference>
<dbReference type="PDB" id="6ERH">
    <property type="method" value="X-ray"/>
    <property type="resolution" value="2.80 A"/>
    <property type="chains" value="B/D=2-555"/>
</dbReference>
<dbReference type="PDB" id="6ZH6">
    <property type="method" value="EM"/>
    <property type="resolution" value="3.93 A"/>
    <property type="chains" value="B=541-732"/>
</dbReference>
<dbReference type="PDB" id="6ZHA">
    <property type="method" value="EM"/>
    <property type="resolution" value="3.91 A"/>
    <property type="chains" value="C=1-732"/>
</dbReference>
<dbReference type="PDB" id="6ZHE">
    <property type="method" value="EM"/>
    <property type="resolution" value="7.24 A"/>
    <property type="chains" value="C/H=1-732"/>
</dbReference>
<dbReference type="PDB" id="7AXZ">
    <property type="method" value="EM"/>
    <property type="resolution" value="3.20 A"/>
    <property type="chains" value="B=1-732"/>
</dbReference>
<dbReference type="PDB" id="7K0Y">
    <property type="method" value="EM"/>
    <property type="resolution" value="3.70 A"/>
    <property type="chains" value="C=1-732"/>
</dbReference>
<dbReference type="PDB" id="7K17">
    <property type="method" value="X-ray"/>
    <property type="resolution" value="4.30 A"/>
    <property type="chains" value="C/D=541-732"/>
</dbReference>
<dbReference type="PDB" id="7K1J">
    <property type="method" value="EM"/>
    <property type="resolution" value="3.90 A"/>
    <property type="chains" value="C=1-732"/>
</dbReference>
<dbReference type="PDB" id="7K1K">
    <property type="method" value="EM"/>
    <property type="resolution" value="4.10 A"/>
    <property type="chains" value="C=1-732"/>
</dbReference>
<dbReference type="PDB" id="7K1N">
    <property type="method" value="EM"/>
    <property type="resolution" value="3.90 A"/>
    <property type="chains" value="C=1-732"/>
</dbReference>
<dbReference type="PDB" id="7LSY">
    <property type="method" value="EM"/>
    <property type="resolution" value="8.40 A"/>
    <property type="chains" value="B/K=1-732"/>
</dbReference>
<dbReference type="PDB" id="7LT3">
    <property type="method" value="EM"/>
    <property type="resolution" value="4.60 A"/>
    <property type="chains" value="B/K=1-732"/>
</dbReference>
<dbReference type="PDB" id="7NFC">
    <property type="method" value="EM"/>
    <property type="resolution" value="4.14 A"/>
    <property type="chains" value="C/H=1-732"/>
</dbReference>
<dbReference type="PDB" id="7NFE">
    <property type="method" value="EM"/>
    <property type="resolution" value="4.29 A"/>
    <property type="chains" value="C=1-732"/>
</dbReference>
<dbReference type="PDB" id="7SGL">
    <property type="method" value="EM"/>
    <property type="resolution" value="3.00 A"/>
    <property type="chains" value="C=1-732"/>
</dbReference>
<dbReference type="PDB" id="7SU3">
    <property type="method" value="EM"/>
    <property type="resolution" value="3.30 A"/>
    <property type="chains" value="C=1-732"/>
</dbReference>
<dbReference type="PDB" id="7SUD">
    <property type="method" value="EM"/>
    <property type="resolution" value="3.60 A"/>
    <property type="chains" value="C=1-732"/>
</dbReference>
<dbReference type="PDB" id="7Z6O">
    <property type="method" value="X-ray"/>
    <property type="resolution" value="3.70 A"/>
    <property type="chains" value="B=1-732"/>
</dbReference>
<dbReference type="PDB" id="7Z87">
    <property type="method" value="EM"/>
    <property type="resolution" value="2.91 A"/>
    <property type="chains" value="C=1-732"/>
</dbReference>
<dbReference type="PDB" id="7Z88">
    <property type="method" value="EM"/>
    <property type="resolution" value="3.33 A"/>
    <property type="chains" value="C=1-732"/>
</dbReference>
<dbReference type="PDB" id="7ZT6">
    <property type="method" value="EM"/>
    <property type="resolution" value="3.50 A"/>
    <property type="chains" value="B=1-732"/>
</dbReference>
<dbReference type="PDB" id="7ZVT">
    <property type="method" value="EM"/>
    <property type="resolution" value="2.74 A"/>
    <property type="chains" value="B=1-732"/>
</dbReference>
<dbReference type="PDB" id="7ZWA">
    <property type="method" value="EM"/>
    <property type="resolution" value="2.80 A"/>
    <property type="chains" value="B=1-732"/>
</dbReference>
<dbReference type="PDB" id="7ZYG">
    <property type="method" value="EM"/>
    <property type="resolution" value="2.68 A"/>
    <property type="chains" value="B=1-732"/>
</dbReference>
<dbReference type="PDB" id="8AG4">
    <property type="method" value="EM"/>
    <property type="resolution" value="2.46 A"/>
    <property type="chains" value="B=1-732"/>
</dbReference>
<dbReference type="PDB" id="8AG5">
    <property type="method" value="EM"/>
    <property type="resolution" value="3.47 A"/>
    <property type="chains" value="B=1-732"/>
</dbReference>
<dbReference type="PDB" id="8ASC">
    <property type="method" value="X-ray"/>
    <property type="resolution" value="2.95 A"/>
    <property type="chains" value="B/F/L/P=2-555"/>
</dbReference>
<dbReference type="PDB" id="8BH3">
    <property type="method" value="EM"/>
    <property type="resolution" value="4.55 A"/>
    <property type="chains" value="C/L=1-732"/>
</dbReference>
<dbReference type="PDB" id="8BHV">
    <property type="method" value="EM"/>
    <property type="resolution" value="4.51 A"/>
    <property type="chains" value="b/j=1-732"/>
</dbReference>
<dbReference type="PDB" id="8BHY">
    <property type="method" value="EM"/>
    <property type="resolution" value="5.33 A"/>
    <property type="chains" value="C/L=1-732"/>
</dbReference>
<dbReference type="PDB" id="8BOT">
    <property type="method" value="EM"/>
    <property type="resolution" value="7.76 A"/>
    <property type="chains" value="C/H/U=1-732"/>
</dbReference>
<dbReference type="PDB" id="8EZA">
    <property type="method" value="EM"/>
    <property type="resolution" value="4.39 A"/>
    <property type="chains" value="B/K=1-732"/>
</dbReference>
<dbReference type="PDB" id="8EZB">
    <property type="method" value="EM"/>
    <property type="resolution" value="8.90 A"/>
    <property type="chains" value="B/K=1-732"/>
</dbReference>
<dbReference type="PDB" id="8RD4">
    <property type="method" value="EM"/>
    <property type="resolution" value="3.58 A"/>
    <property type="chains" value="F=1-732"/>
</dbReference>
<dbReference type="PDBsum" id="1JEQ"/>
<dbReference type="PDBsum" id="1JEY"/>
<dbReference type="PDBsum" id="1Q2Z"/>
<dbReference type="PDBsum" id="1RW2"/>
<dbReference type="PDBsum" id="3RZ9"/>
<dbReference type="PDBsum" id="5Y3R"/>
<dbReference type="PDBsum" id="6ERF"/>
<dbReference type="PDBsum" id="6ERG"/>
<dbReference type="PDBsum" id="6ERH"/>
<dbReference type="PDBsum" id="6ZH6"/>
<dbReference type="PDBsum" id="6ZHA"/>
<dbReference type="PDBsum" id="6ZHE"/>
<dbReference type="PDBsum" id="7AXZ"/>
<dbReference type="PDBsum" id="7K0Y"/>
<dbReference type="PDBsum" id="7K17"/>
<dbReference type="PDBsum" id="7K1J"/>
<dbReference type="PDBsum" id="7K1K"/>
<dbReference type="PDBsum" id="7K1N"/>
<dbReference type="PDBsum" id="7LSY"/>
<dbReference type="PDBsum" id="7LT3"/>
<dbReference type="PDBsum" id="7NFC"/>
<dbReference type="PDBsum" id="7NFE"/>
<dbReference type="PDBsum" id="7SGL"/>
<dbReference type="PDBsum" id="7SU3"/>
<dbReference type="PDBsum" id="7SUD"/>
<dbReference type="PDBsum" id="7Z6O"/>
<dbReference type="PDBsum" id="7Z87"/>
<dbReference type="PDBsum" id="7Z88"/>
<dbReference type="PDBsum" id="7ZT6"/>
<dbReference type="PDBsum" id="7ZVT"/>
<dbReference type="PDBsum" id="7ZWA"/>
<dbReference type="PDBsum" id="7ZYG"/>
<dbReference type="PDBsum" id="8AG4"/>
<dbReference type="PDBsum" id="8AG5"/>
<dbReference type="PDBsum" id="8ASC"/>
<dbReference type="PDBsum" id="8BH3"/>
<dbReference type="PDBsum" id="8BHV"/>
<dbReference type="PDBsum" id="8BHY"/>
<dbReference type="PDBsum" id="8BOT"/>
<dbReference type="PDBsum" id="8EZA"/>
<dbReference type="PDBsum" id="8EZB"/>
<dbReference type="PDBsum" id="8RD4"/>
<dbReference type="BMRB" id="P13010"/>
<dbReference type="EMDB" id="EMD-11215"/>
<dbReference type="EMDB" id="EMD-11217"/>
<dbReference type="EMDB" id="EMD-11219"/>
<dbReference type="EMDB" id="EMD-11933"/>
<dbReference type="EMDB" id="EMD-12299"/>
<dbReference type="EMDB" id="EMD-12301"/>
<dbReference type="EMDB" id="EMD-14545"/>
<dbReference type="EMDB" id="EMD-14546"/>
<dbReference type="EMDB" id="EMD-14955"/>
<dbReference type="EMDB" id="EMD-14986"/>
<dbReference type="EMDB" id="EMD-14995"/>
<dbReference type="EMDB" id="EMD-15022"/>
<dbReference type="EMDB" id="EMD-15415"/>
<dbReference type="EMDB" id="EMD-15416"/>
<dbReference type="EMDB" id="EMD-16044"/>
<dbReference type="EMDB" id="EMD-16070"/>
<dbReference type="EMDB" id="EMD-16074"/>
<dbReference type="EMDB" id="EMD-16145"/>
<dbReference type="EMDB" id="EMD-19065"/>
<dbReference type="EMDB" id="EMD-22618"/>
<dbReference type="EMDB" id="EMD-22624"/>
<dbReference type="EMDB" id="EMD-22625"/>
<dbReference type="EMDB" id="EMD-22626"/>
<dbReference type="EMDB" id="EMD-23509"/>
<dbReference type="EMDB" id="EMD-23510"/>
<dbReference type="EMDB" id="EMD-23511"/>
<dbReference type="EMDB" id="EMD-23513"/>
<dbReference type="EMDB" id="EMD-23514"/>
<dbReference type="EMDB" id="EMD-25113"/>
<dbReference type="EMDB" id="EMD-25114"/>
<dbReference type="EMDB" id="EMD-25115"/>
<dbReference type="EMDB" id="EMD-25439"/>
<dbReference type="EMDB" id="EMD-25440"/>
<dbReference type="EMDB" id="EMD-28732"/>
<dbReference type="EMDB" id="EMD-28733"/>
<dbReference type="EMDB" id="EMD-28735"/>
<dbReference type="EMDB" id="EMD-28738"/>
<dbReference type="EMDB" id="EMD-5833"/>
<dbReference type="EMDB" id="EMD-6803"/>
<dbReference type="SASBDB" id="P13010"/>
<dbReference type="SMR" id="P13010"/>
<dbReference type="BioGRID" id="113353">
    <property type="interactions" value="535"/>
</dbReference>
<dbReference type="ComplexPortal" id="CPX-1993">
    <property type="entry name" value="Ku70:Ku80 complex"/>
</dbReference>
<dbReference type="CORUM" id="P13010"/>
<dbReference type="DIP" id="DIP-31379N"/>
<dbReference type="ELM" id="P13010"/>
<dbReference type="FunCoup" id="P13010">
    <property type="interactions" value="2445"/>
</dbReference>
<dbReference type="IntAct" id="P13010">
    <property type="interactions" value="185"/>
</dbReference>
<dbReference type="MINT" id="P13010"/>
<dbReference type="STRING" id="9606.ENSP00000375978"/>
<dbReference type="ChEMBL" id="CHEMBL4106136"/>
<dbReference type="MoonDB" id="P13010">
    <property type="type" value="Curated"/>
</dbReference>
<dbReference type="GlyGen" id="P13010">
    <property type="glycosylation" value="3 sites, 1 O-linked glycan (3 sites)"/>
</dbReference>
<dbReference type="iPTMnet" id="P13010"/>
<dbReference type="MetOSite" id="P13010"/>
<dbReference type="PhosphoSitePlus" id="P13010"/>
<dbReference type="SwissPalm" id="P13010"/>
<dbReference type="BioMuta" id="XRCC5"/>
<dbReference type="DMDM" id="125731"/>
<dbReference type="CPTAC" id="CPTAC-606"/>
<dbReference type="CPTAC" id="CPTAC-607"/>
<dbReference type="jPOST" id="P13010"/>
<dbReference type="MassIVE" id="P13010"/>
<dbReference type="PaxDb" id="9606-ENSP00000375978"/>
<dbReference type="PeptideAtlas" id="P13010"/>
<dbReference type="ProteomicsDB" id="52890"/>
<dbReference type="Pumba" id="P13010"/>
<dbReference type="Antibodypedia" id="3849">
    <property type="antibodies" value="1220 antibodies from 47 providers"/>
</dbReference>
<dbReference type="CPTC" id="P13010">
    <property type="antibodies" value="1 antibody"/>
</dbReference>
<dbReference type="DNASU" id="7520"/>
<dbReference type="Ensembl" id="ENST00000392132.7">
    <property type="protein sequence ID" value="ENSP00000375977.2"/>
    <property type="gene ID" value="ENSG00000079246.16"/>
</dbReference>
<dbReference type="Ensembl" id="ENST00000392133.7">
    <property type="protein sequence ID" value="ENSP00000375978.3"/>
    <property type="gene ID" value="ENSG00000079246.16"/>
</dbReference>
<dbReference type="GeneID" id="7520"/>
<dbReference type="KEGG" id="hsa:7520"/>
<dbReference type="MANE-Select" id="ENST00000392132.7">
    <property type="protein sequence ID" value="ENSP00000375977.2"/>
    <property type="RefSeq nucleotide sequence ID" value="NM_021141.4"/>
    <property type="RefSeq protein sequence ID" value="NP_066964.1"/>
</dbReference>
<dbReference type="UCSC" id="uc002vfy.4">
    <property type="organism name" value="human"/>
</dbReference>
<dbReference type="AGR" id="HGNC:12833"/>
<dbReference type="CTD" id="7520"/>
<dbReference type="DisGeNET" id="7520"/>
<dbReference type="GeneCards" id="XRCC5"/>
<dbReference type="HGNC" id="HGNC:12833">
    <property type="gene designation" value="XRCC5"/>
</dbReference>
<dbReference type="HPA" id="ENSG00000079246">
    <property type="expression patterns" value="Low tissue specificity"/>
</dbReference>
<dbReference type="MIM" id="194364">
    <property type="type" value="gene"/>
</dbReference>
<dbReference type="neXtProt" id="NX_P13010"/>
<dbReference type="OpenTargets" id="ENSG00000079246"/>
<dbReference type="PharmGKB" id="PA37425"/>
<dbReference type="VEuPathDB" id="HostDB:ENSG00000079246"/>
<dbReference type="eggNOG" id="KOG2326">
    <property type="taxonomic scope" value="Eukaryota"/>
</dbReference>
<dbReference type="GeneTree" id="ENSGT00940000153239"/>
<dbReference type="HOGENOM" id="CLU_010975_2_1_1"/>
<dbReference type="InParanoid" id="P13010"/>
<dbReference type="OMA" id="WAMQYVW"/>
<dbReference type="OrthoDB" id="30826at2759"/>
<dbReference type="PAN-GO" id="P13010">
    <property type="GO annotations" value="7 GO annotations based on evolutionary models"/>
</dbReference>
<dbReference type="PhylomeDB" id="P13010"/>
<dbReference type="TreeFam" id="TF101205"/>
<dbReference type="PathwayCommons" id="P13010"/>
<dbReference type="Reactome" id="R-HSA-164843">
    <property type="pathway name" value="2-LTR circle formation"/>
</dbReference>
<dbReference type="Reactome" id="R-HSA-1834949">
    <property type="pathway name" value="Cytosolic sensors of pathogen-associated DNA"/>
</dbReference>
<dbReference type="Reactome" id="R-HSA-3270619">
    <property type="pathway name" value="IRF3-mediated induction of type I IFN"/>
</dbReference>
<dbReference type="Reactome" id="R-HSA-5693571">
    <property type="pathway name" value="Nonhomologous End-Joining (NHEJ)"/>
</dbReference>
<dbReference type="Reactome" id="R-HSA-6798695">
    <property type="pathway name" value="Neutrophil degranulation"/>
</dbReference>
<dbReference type="SignaLink" id="P13010"/>
<dbReference type="SIGNOR" id="P13010"/>
<dbReference type="BioGRID-ORCS" id="7520">
    <property type="hits" value="758 hits in 1171 CRISPR screens"/>
</dbReference>
<dbReference type="CD-CODE" id="232F8A39">
    <property type="entry name" value="P-body"/>
</dbReference>
<dbReference type="CD-CODE" id="91857CE7">
    <property type="entry name" value="Nucleolus"/>
</dbReference>
<dbReference type="ChiTaRS" id="XRCC5">
    <property type="organism name" value="human"/>
</dbReference>
<dbReference type="EvolutionaryTrace" id="P13010"/>
<dbReference type="GeneWiki" id="Ku80"/>
<dbReference type="GenomeRNAi" id="7520"/>
<dbReference type="Pharos" id="P13010">
    <property type="development level" value="Tbio"/>
</dbReference>
<dbReference type="PRO" id="PR:P13010"/>
<dbReference type="Proteomes" id="UP000005640">
    <property type="component" value="Chromosome 2"/>
</dbReference>
<dbReference type="RNAct" id="P13010">
    <property type="molecule type" value="protein"/>
</dbReference>
<dbReference type="Bgee" id="ENSG00000079246">
    <property type="expression patterns" value="Expressed in embryo and 217 other cell types or tissues"/>
</dbReference>
<dbReference type="ExpressionAtlas" id="P13010">
    <property type="expression patterns" value="baseline and differential"/>
</dbReference>
<dbReference type="GO" id="GO:0000781">
    <property type="term" value="C:chromosome, telomeric region"/>
    <property type="evidence" value="ECO:0000314"/>
    <property type="project" value="BHF-UCL"/>
</dbReference>
<dbReference type="GO" id="GO:0005829">
    <property type="term" value="C:cytosol"/>
    <property type="evidence" value="ECO:0000304"/>
    <property type="project" value="Reactome"/>
</dbReference>
<dbReference type="GO" id="GO:0070418">
    <property type="term" value="C:DNA-dependent protein kinase complex"/>
    <property type="evidence" value="ECO:0000353"/>
    <property type="project" value="ComplexPortal"/>
</dbReference>
<dbReference type="GO" id="GO:0005958">
    <property type="term" value="C:DNA-dependent protein kinase-DNA ligase 4 complex"/>
    <property type="evidence" value="ECO:0000314"/>
    <property type="project" value="UniProtKB"/>
</dbReference>
<dbReference type="GO" id="GO:0005576">
    <property type="term" value="C:extracellular region"/>
    <property type="evidence" value="ECO:0000304"/>
    <property type="project" value="Reactome"/>
</dbReference>
<dbReference type="GO" id="GO:0043564">
    <property type="term" value="C:Ku70:Ku80 complex"/>
    <property type="evidence" value="ECO:0000314"/>
    <property type="project" value="UniProtKB"/>
</dbReference>
<dbReference type="GO" id="GO:0016020">
    <property type="term" value="C:membrane"/>
    <property type="evidence" value="ECO:0007005"/>
    <property type="project" value="UniProtKB"/>
</dbReference>
<dbReference type="GO" id="GO:0070419">
    <property type="term" value="C:nonhomologous end joining complex"/>
    <property type="evidence" value="ECO:0000314"/>
    <property type="project" value="UniProtKB"/>
</dbReference>
<dbReference type="GO" id="GO:0000783">
    <property type="term" value="C:nuclear telomere cap complex"/>
    <property type="evidence" value="ECO:0000304"/>
    <property type="project" value="BHF-UCL"/>
</dbReference>
<dbReference type="GO" id="GO:0005730">
    <property type="term" value="C:nucleolus"/>
    <property type="evidence" value="ECO:0000314"/>
    <property type="project" value="UniProtKB"/>
</dbReference>
<dbReference type="GO" id="GO:0005654">
    <property type="term" value="C:nucleoplasm"/>
    <property type="evidence" value="ECO:0000314"/>
    <property type="project" value="HPA"/>
</dbReference>
<dbReference type="GO" id="GO:0005634">
    <property type="term" value="C:nucleus"/>
    <property type="evidence" value="ECO:0000314"/>
    <property type="project" value="UniProtKB"/>
</dbReference>
<dbReference type="GO" id="GO:0005886">
    <property type="term" value="C:plasma membrane"/>
    <property type="evidence" value="ECO:0000314"/>
    <property type="project" value="HPA"/>
</dbReference>
<dbReference type="GO" id="GO:0032991">
    <property type="term" value="C:protein-containing complex"/>
    <property type="evidence" value="ECO:0000314"/>
    <property type="project" value="CAFA"/>
</dbReference>
<dbReference type="GO" id="GO:0032993">
    <property type="term" value="C:protein-DNA complex"/>
    <property type="evidence" value="ECO:0000314"/>
    <property type="project" value="CAFA"/>
</dbReference>
<dbReference type="GO" id="GO:1990904">
    <property type="term" value="C:ribonucleoprotein complex"/>
    <property type="evidence" value="ECO:0000314"/>
    <property type="project" value="UniProtKB"/>
</dbReference>
<dbReference type="GO" id="GO:0034774">
    <property type="term" value="C:secretory granule lumen"/>
    <property type="evidence" value="ECO:0000304"/>
    <property type="project" value="Reactome"/>
</dbReference>
<dbReference type="GO" id="GO:0090734">
    <property type="term" value="C:site of DNA damage"/>
    <property type="evidence" value="ECO:0000315"/>
    <property type="project" value="UniProtKB"/>
</dbReference>
<dbReference type="GO" id="GO:0032040">
    <property type="term" value="C:small-subunit processome"/>
    <property type="evidence" value="ECO:0000314"/>
    <property type="project" value="UniProtKB"/>
</dbReference>
<dbReference type="GO" id="GO:0005524">
    <property type="term" value="F:ATP binding"/>
    <property type="evidence" value="ECO:0007669"/>
    <property type="project" value="UniProtKB-KW"/>
</dbReference>
<dbReference type="GO" id="GO:0016887">
    <property type="term" value="F:ATP hydrolysis activity"/>
    <property type="evidence" value="ECO:0000314"/>
    <property type="project" value="FlyBase"/>
</dbReference>
<dbReference type="GO" id="GO:0008094">
    <property type="term" value="F:ATP-dependent activity, acting on DNA"/>
    <property type="evidence" value="ECO:0000314"/>
    <property type="project" value="FlyBase"/>
</dbReference>
<dbReference type="GO" id="GO:0003684">
    <property type="term" value="F:damaged DNA binding"/>
    <property type="evidence" value="ECO:0007669"/>
    <property type="project" value="InterPro"/>
</dbReference>
<dbReference type="GO" id="GO:0003677">
    <property type="term" value="F:DNA binding"/>
    <property type="evidence" value="ECO:0000303"/>
    <property type="project" value="UniProtKB"/>
</dbReference>
<dbReference type="GO" id="GO:0045027">
    <property type="term" value="F:DNA end binding"/>
    <property type="evidence" value="ECO:0000314"/>
    <property type="project" value="UniProtKB"/>
</dbReference>
<dbReference type="GO" id="GO:0003678">
    <property type="term" value="F:DNA helicase activity"/>
    <property type="evidence" value="ECO:0000304"/>
    <property type="project" value="ProtInc"/>
</dbReference>
<dbReference type="GO" id="GO:0003690">
    <property type="term" value="F:double-stranded DNA binding"/>
    <property type="evidence" value="ECO:0000304"/>
    <property type="project" value="ProtInc"/>
</dbReference>
<dbReference type="GO" id="GO:0008047">
    <property type="term" value="F:enzyme activator activity"/>
    <property type="evidence" value="ECO:0000304"/>
    <property type="project" value="BHF-UCL"/>
</dbReference>
<dbReference type="GO" id="GO:0044877">
    <property type="term" value="F:protein-containing complex binding"/>
    <property type="evidence" value="ECO:0000353"/>
    <property type="project" value="BHF-UCL"/>
</dbReference>
<dbReference type="GO" id="GO:0003723">
    <property type="term" value="F:RNA binding"/>
    <property type="evidence" value="ECO:0000314"/>
    <property type="project" value="UniProtKB"/>
</dbReference>
<dbReference type="GO" id="GO:0042162">
    <property type="term" value="F:telomeric DNA binding"/>
    <property type="evidence" value="ECO:0000314"/>
    <property type="project" value="BHF-UCL"/>
</dbReference>
<dbReference type="GO" id="GO:0000976">
    <property type="term" value="F:transcription cis-regulatory region binding"/>
    <property type="evidence" value="ECO:0000314"/>
    <property type="project" value="BHF-UCL"/>
</dbReference>
<dbReference type="GO" id="GO:0034511">
    <property type="term" value="F:U3 snoRNA binding"/>
    <property type="evidence" value="ECO:0000314"/>
    <property type="project" value="UniProtKB"/>
</dbReference>
<dbReference type="GO" id="GO:0031625">
    <property type="term" value="F:ubiquitin protein ligase binding"/>
    <property type="evidence" value="ECO:0000353"/>
    <property type="project" value="UniProtKB"/>
</dbReference>
<dbReference type="GO" id="GO:0002218">
    <property type="term" value="P:activation of innate immune response"/>
    <property type="evidence" value="ECO:0000314"/>
    <property type="project" value="UniProtKB"/>
</dbReference>
<dbReference type="GO" id="GO:0071480">
    <property type="term" value="P:cellular response to gamma radiation"/>
    <property type="evidence" value="ECO:0000314"/>
    <property type="project" value="UniProtKB"/>
</dbReference>
<dbReference type="GO" id="GO:1990830">
    <property type="term" value="P:cellular response to leukemia inhibitory factor"/>
    <property type="evidence" value="ECO:0007669"/>
    <property type="project" value="Ensembl"/>
</dbReference>
<dbReference type="GO" id="GO:0006974">
    <property type="term" value="P:DNA damage response"/>
    <property type="evidence" value="ECO:0000315"/>
    <property type="project" value="UniProtKB"/>
</dbReference>
<dbReference type="GO" id="GO:0006310">
    <property type="term" value="P:DNA recombination"/>
    <property type="evidence" value="ECO:0000304"/>
    <property type="project" value="ProtInc"/>
</dbReference>
<dbReference type="GO" id="GO:0006302">
    <property type="term" value="P:double-strand break repair"/>
    <property type="evidence" value="ECO:0000315"/>
    <property type="project" value="BHF-UCL"/>
</dbReference>
<dbReference type="GO" id="GO:0006303">
    <property type="term" value="P:double-strand break repair via nonhomologous end joining"/>
    <property type="evidence" value="ECO:0000314"/>
    <property type="project" value="UniProtKB"/>
</dbReference>
<dbReference type="GO" id="GO:0060218">
    <property type="term" value="P:hematopoietic stem cell differentiation"/>
    <property type="evidence" value="ECO:0007669"/>
    <property type="project" value="Ensembl"/>
</dbReference>
<dbReference type="GO" id="GO:0071425">
    <property type="term" value="P:hematopoietic stem cell proliferation"/>
    <property type="evidence" value="ECO:0007669"/>
    <property type="project" value="Ensembl"/>
</dbReference>
<dbReference type="GO" id="GO:0045087">
    <property type="term" value="P:innate immune response"/>
    <property type="evidence" value="ECO:0007669"/>
    <property type="project" value="UniProtKB-KW"/>
</dbReference>
<dbReference type="GO" id="GO:0045892">
    <property type="term" value="P:negative regulation of DNA-templated transcription"/>
    <property type="evidence" value="ECO:0000315"/>
    <property type="project" value="UniProtKB"/>
</dbReference>
<dbReference type="GO" id="GO:1904430">
    <property type="term" value="P:negative regulation of t-circle formation"/>
    <property type="evidence" value="ECO:0000315"/>
    <property type="project" value="BHF-UCL"/>
</dbReference>
<dbReference type="GO" id="GO:0022008">
    <property type="term" value="P:neurogenesis"/>
    <property type="evidence" value="ECO:0007669"/>
    <property type="project" value="Ensembl"/>
</dbReference>
<dbReference type="GO" id="GO:0050769">
    <property type="term" value="P:positive regulation of neurogenesis"/>
    <property type="evidence" value="ECO:0007669"/>
    <property type="project" value="Ensembl"/>
</dbReference>
<dbReference type="GO" id="GO:0045860">
    <property type="term" value="P:positive regulation of protein kinase activity"/>
    <property type="evidence" value="ECO:0000314"/>
    <property type="project" value="CAFA"/>
</dbReference>
<dbReference type="GO" id="GO:0070198">
    <property type="term" value="P:protein localization to chromosome, telomeric region"/>
    <property type="evidence" value="ECO:0000315"/>
    <property type="project" value="BHF-UCL"/>
</dbReference>
<dbReference type="GO" id="GO:0000725">
    <property type="term" value="P:recombinational repair"/>
    <property type="evidence" value="ECO:0000303"/>
    <property type="project" value="ComplexPortal"/>
</dbReference>
<dbReference type="GO" id="GO:0048660">
    <property type="term" value="P:regulation of smooth muscle cell proliferation"/>
    <property type="evidence" value="ECO:0000315"/>
    <property type="project" value="UniProtKB"/>
</dbReference>
<dbReference type="GO" id="GO:0032204">
    <property type="term" value="P:regulation of telomere maintenance"/>
    <property type="evidence" value="ECO:0000304"/>
    <property type="project" value="BHF-UCL"/>
</dbReference>
<dbReference type="GO" id="GO:0034462">
    <property type="term" value="P:small-subunit processome assembly"/>
    <property type="evidence" value="ECO:0000314"/>
    <property type="project" value="UniProtKB"/>
</dbReference>
<dbReference type="GO" id="GO:0000723">
    <property type="term" value="P:telomere maintenance"/>
    <property type="evidence" value="ECO:0000318"/>
    <property type="project" value="GO_Central"/>
</dbReference>
<dbReference type="GO" id="GO:0007004">
    <property type="term" value="P:telomere maintenance via telomerase"/>
    <property type="evidence" value="ECO:0000315"/>
    <property type="project" value="BHF-UCL"/>
</dbReference>
<dbReference type="CDD" id="cd00873">
    <property type="entry name" value="KU80"/>
    <property type="match status" value="1"/>
</dbReference>
<dbReference type="CDD" id="cd01458">
    <property type="entry name" value="vWA_ku"/>
    <property type="match status" value="1"/>
</dbReference>
<dbReference type="DisProt" id="DP01255"/>
<dbReference type="FunFam" id="1.10.1600.10:FF:000002">
    <property type="entry name" value="X-ray repair cross-complementing protein 5"/>
    <property type="match status" value="1"/>
</dbReference>
<dbReference type="FunFam" id="1.25.40.240:FF:000001">
    <property type="entry name" value="X-ray repair cross-complementing protein 5"/>
    <property type="match status" value="1"/>
</dbReference>
<dbReference type="FunFam" id="2.40.290.10:FF:000005">
    <property type="entry name" value="X-ray repair cross-complementing protein 5"/>
    <property type="match status" value="1"/>
</dbReference>
<dbReference type="FunFam" id="3.40.50.410:FF:000055">
    <property type="entry name" value="X-ray repair cross-complementing protein 5"/>
    <property type="match status" value="1"/>
</dbReference>
<dbReference type="Gene3D" id="1.10.1600.10">
    <property type="match status" value="1"/>
</dbReference>
<dbReference type="Gene3D" id="2.40.290.10">
    <property type="match status" value="1"/>
</dbReference>
<dbReference type="Gene3D" id="1.25.40.240">
    <property type="entry name" value="Ku, C-terminal domain"/>
    <property type="match status" value="1"/>
</dbReference>
<dbReference type="Gene3D" id="3.40.50.410">
    <property type="entry name" value="von Willebrand factor, type A domain"/>
    <property type="match status" value="1"/>
</dbReference>
<dbReference type="IDEAL" id="IID00024"/>
<dbReference type="InterPro" id="IPR006164">
    <property type="entry name" value="Ku70/Ku80_beta-barrel_dom"/>
</dbReference>
<dbReference type="InterPro" id="IPR024193">
    <property type="entry name" value="Ku80"/>
</dbReference>
<dbReference type="InterPro" id="IPR005160">
    <property type="entry name" value="Ku_C"/>
</dbReference>
<dbReference type="InterPro" id="IPR036494">
    <property type="entry name" value="Ku_C_sf"/>
</dbReference>
<dbReference type="InterPro" id="IPR005161">
    <property type="entry name" value="Ku_N"/>
</dbReference>
<dbReference type="InterPro" id="IPR014893">
    <property type="entry name" value="Ku_PK_bind"/>
</dbReference>
<dbReference type="InterPro" id="IPR016194">
    <property type="entry name" value="SPOC-like_C_dom_sf"/>
</dbReference>
<dbReference type="InterPro" id="IPR002035">
    <property type="entry name" value="VWF_A"/>
</dbReference>
<dbReference type="InterPro" id="IPR036465">
    <property type="entry name" value="vWFA_dom_sf"/>
</dbReference>
<dbReference type="PANTHER" id="PTHR12604">
    <property type="entry name" value="KU AUTOANTIGEN DNA HELICASE"/>
    <property type="match status" value="1"/>
</dbReference>
<dbReference type="PANTHER" id="PTHR12604:SF4">
    <property type="entry name" value="X-RAY REPAIR CROSS-COMPLEMENTING PROTEIN 5"/>
    <property type="match status" value="1"/>
</dbReference>
<dbReference type="Pfam" id="PF02735">
    <property type="entry name" value="Ku"/>
    <property type="match status" value="1"/>
</dbReference>
<dbReference type="Pfam" id="PF03730">
    <property type="entry name" value="Ku_C"/>
    <property type="match status" value="1"/>
</dbReference>
<dbReference type="Pfam" id="PF03731">
    <property type="entry name" value="Ku_N"/>
    <property type="match status" value="1"/>
</dbReference>
<dbReference type="Pfam" id="PF08785">
    <property type="entry name" value="Ku_PK_bind"/>
    <property type="match status" value="1"/>
</dbReference>
<dbReference type="PIRSF" id="PIRSF016570">
    <property type="entry name" value="Ku80"/>
    <property type="match status" value="1"/>
</dbReference>
<dbReference type="SMART" id="SM00559">
    <property type="entry name" value="Ku78"/>
    <property type="match status" value="1"/>
</dbReference>
<dbReference type="SMART" id="SM00327">
    <property type="entry name" value="VWA"/>
    <property type="match status" value="1"/>
</dbReference>
<dbReference type="SUPFAM" id="SSF101420">
    <property type="entry name" value="C-terminal domain of Ku80"/>
    <property type="match status" value="1"/>
</dbReference>
<dbReference type="SUPFAM" id="SSF100939">
    <property type="entry name" value="SPOC domain-like"/>
    <property type="match status" value="1"/>
</dbReference>
<dbReference type="SUPFAM" id="SSF53300">
    <property type="entry name" value="vWA-like"/>
    <property type="match status" value="1"/>
</dbReference>
<accession>P13010</accession>
<accession>A8K3X5</accession>
<accession>Q0Z7V0</accession>
<accession>Q4VBQ5</accession>
<accession>Q53HH7</accession>
<accession>Q7M4N0</accession>
<accession>Q9UCQ0</accession>
<accession>Q9UCQ1</accession>
<protein>
    <recommendedName>
        <fullName>X-ray repair cross-complementing protein 5</fullName>
        <ecNumber>3.6.4.-</ecNumber>
    </recommendedName>
    <alternativeName>
        <fullName>86 kDa subunit of Ku antigen</fullName>
    </alternativeName>
    <alternativeName>
        <fullName>ATP-dependent DNA helicase 2 subunit 2</fullName>
    </alternativeName>
    <alternativeName>
        <fullName>ATP-dependent DNA helicase II 80 kDa subunit</fullName>
    </alternativeName>
    <alternativeName>
        <fullName>CTC box-binding factor 85 kDa subunit</fullName>
        <shortName>CTC85</shortName>
        <shortName>CTCBF</shortName>
    </alternativeName>
    <alternativeName>
        <fullName>DNA repair protein XRCC5</fullName>
    </alternativeName>
    <alternativeName>
        <fullName>Ku80</fullName>
    </alternativeName>
    <alternativeName>
        <fullName>Ku86</fullName>
    </alternativeName>
    <alternativeName>
        <fullName>Lupus Ku autoantigen protein p86</fullName>
    </alternativeName>
    <alternativeName>
        <fullName>Nuclear factor IV</fullName>
    </alternativeName>
    <alternativeName>
        <fullName>Thyroid-lupus autoantigen</fullName>
        <shortName>TLAA</shortName>
    </alternativeName>
    <alternativeName>
        <fullName>X-ray repair complementing defective repair in Chinese hamster cells 5 (double-strand-break rejoining)</fullName>
    </alternativeName>
</protein>
<keyword id="KW-0002">3D-structure</keyword>
<keyword id="KW-0007">Acetylation</keyword>
<keyword id="KW-0010">Activator</keyword>
<keyword id="KW-0013">ADP-ribosylation</keyword>
<keyword id="KW-0067">ATP-binding</keyword>
<keyword id="KW-0158">Chromosome</keyword>
<keyword id="KW-0903">Direct protein sequencing</keyword>
<keyword id="KW-0227">DNA damage</keyword>
<keyword id="KW-0233">DNA recombination</keyword>
<keyword id="KW-0234">DNA repair</keyword>
<keyword id="KW-0238">DNA-binding</keyword>
<keyword id="KW-0347">Helicase</keyword>
<keyword id="KW-0945">Host-virus interaction</keyword>
<keyword id="KW-0378">Hydrolase</keyword>
<keyword id="KW-0391">Immunity</keyword>
<keyword id="KW-0399">Innate immunity</keyword>
<keyword id="KW-1017">Isopeptide bond</keyword>
<keyword id="KW-0547">Nucleotide-binding</keyword>
<keyword id="KW-0539">Nucleus</keyword>
<keyword id="KW-0597">Phosphoprotein</keyword>
<keyword id="KW-1267">Proteomics identification</keyword>
<keyword id="KW-1185">Reference proteome</keyword>
<keyword id="KW-0690">Ribosome biogenesis</keyword>
<keyword id="KW-0772">Systemic lupus erythematosus</keyword>
<keyword id="KW-0804">Transcription</keyword>
<keyword id="KW-0805">Transcription regulation</keyword>
<keyword id="KW-0832">Ubl conjugation</keyword>
<evidence type="ECO:0000250" key="1">
    <source>
        <dbReference type="UniProtKB" id="P27641"/>
    </source>
</evidence>
<evidence type="ECO:0000250" key="2">
    <source>
        <dbReference type="UniProtKB" id="Q6DDS9"/>
    </source>
</evidence>
<evidence type="ECO:0000255" key="3"/>
<evidence type="ECO:0000255" key="4">
    <source>
        <dbReference type="PROSITE-ProRule" id="PRU00219"/>
    </source>
</evidence>
<evidence type="ECO:0000269" key="5">
    <source>
    </source>
</evidence>
<evidence type="ECO:0000269" key="6">
    <source>
    </source>
</evidence>
<evidence type="ECO:0000269" key="7">
    <source>
    </source>
</evidence>
<evidence type="ECO:0000269" key="8">
    <source>
    </source>
</evidence>
<evidence type="ECO:0000269" key="9">
    <source>
    </source>
</evidence>
<evidence type="ECO:0000269" key="10">
    <source>
    </source>
</evidence>
<evidence type="ECO:0000269" key="11">
    <source>
    </source>
</evidence>
<evidence type="ECO:0000269" key="12">
    <source>
    </source>
</evidence>
<evidence type="ECO:0000269" key="13">
    <source>
    </source>
</evidence>
<evidence type="ECO:0000269" key="14">
    <source>
    </source>
</evidence>
<evidence type="ECO:0000269" key="15">
    <source>
    </source>
</evidence>
<evidence type="ECO:0000269" key="16">
    <source>
    </source>
</evidence>
<evidence type="ECO:0000269" key="17">
    <source>
    </source>
</evidence>
<evidence type="ECO:0000269" key="18">
    <source>
    </source>
</evidence>
<evidence type="ECO:0000269" key="19">
    <source>
    </source>
</evidence>
<evidence type="ECO:0000269" key="20">
    <source>
    </source>
</evidence>
<evidence type="ECO:0000269" key="21">
    <source>
    </source>
</evidence>
<evidence type="ECO:0000269" key="22">
    <source>
    </source>
</evidence>
<evidence type="ECO:0000269" key="23">
    <source>
    </source>
</evidence>
<evidence type="ECO:0000269" key="24">
    <source>
    </source>
</evidence>
<evidence type="ECO:0000269" key="25">
    <source>
    </source>
</evidence>
<evidence type="ECO:0000269" key="26">
    <source>
    </source>
</evidence>
<evidence type="ECO:0000269" key="27">
    <source>
    </source>
</evidence>
<evidence type="ECO:0000269" key="28">
    <source>
    </source>
</evidence>
<evidence type="ECO:0000269" key="29">
    <source>
    </source>
</evidence>
<evidence type="ECO:0000269" key="30">
    <source>
    </source>
</evidence>
<evidence type="ECO:0000269" key="31">
    <source>
    </source>
</evidence>
<evidence type="ECO:0000269" key="32">
    <source>
    </source>
</evidence>
<evidence type="ECO:0000269" key="33">
    <source>
    </source>
</evidence>
<evidence type="ECO:0000269" key="34">
    <source>
    </source>
</evidence>
<evidence type="ECO:0000269" key="35">
    <source>
    </source>
</evidence>
<evidence type="ECO:0000269" key="36">
    <source>
    </source>
</evidence>
<evidence type="ECO:0000269" key="37">
    <source>
    </source>
</evidence>
<evidence type="ECO:0000269" key="38">
    <source>
    </source>
</evidence>
<evidence type="ECO:0000269" key="39">
    <source>
    </source>
</evidence>
<evidence type="ECO:0000269" key="40">
    <source>
    </source>
</evidence>
<evidence type="ECO:0000269" key="41">
    <source>
    </source>
</evidence>
<evidence type="ECO:0000269" key="42">
    <source>
    </source>
</evidence>
<evidence type="ECO:0000269" key="43">
    <source>
    </source>
</evidence>
<evidence type="ECO:0000305" key="44"/>
<evidence type="ECO:0000305" key="45">
    <source>
    </source>
</evidence>
<evidence type="ECO:0007744" key="46">
    <source>
        <dbReference type="PDB" id="7LSY"/>
    </source>
</evidence>
<evidence type="ECO:0007744" key="47">
    <source>
        <dbReference type="PDB" id="7LT3"/>
    </source>
</evidence>
<evidence type="ECO:0007744" key="48">
    <source>
        <dbReference type="PDB" id="7NFC"/>
    </source>
</evidence>
<evidence type="ECO:0007744" key="49">
    <source>
        <dbReference type="PDB" id="7NFE"/>
    </source>
</evidence>
<evidence type="ECO:0007744" key="50">
    <source>
    </source>
</evidence>
<evidence type="ECO:0007744" key="51">
    <source>
    </source>
</evidence>
<evidence type="ECO:0007744" key="52">
    <source>
    </source>
</evidence>
<evidence type="ECO:0007744" key="53">
    <source>
    </source>
</evidence>
<evidence type="ECO:0007744" key="54">
    <source>
    </source>
</evidence>
<evidence type="ECO:0007829" key="55">
    <source>
        <dbReference type="PDB" id="1JEQ"/>
    </source>
</evidence>
<evidence type="ECO:0007829" key="56">
    <source>
        <dbReference type="PDB" id="1JEY"/>
    </source>
</evidence>
<evidence type="ECO:0007829" key="57">
    <source>
        <dbReference type="PDB" id="1RW2"/>
    </source>
</evidence>
<evidence type="ECO:0007829" key="58">
    <source>
        <dbReference type="PDB" id="7SGL"/>
    </source>
</evidence>
<evidence type="ECO:0007829" key="59">
    <source>
        <dbReference type="PDB" id="7SU3"/>
    </source>
</evidence>
<evidence type="ECO:0007829" key="60">
    <source>
        <dbReference type="PDB" id="7Z87"/>
    </source>
</evidence>
<evidence type="ECO:0007829" key="61">
    <source>
        <dbReference type="PDB" id="7Z88"/>
    </source>
</evidence>
<evidence type="ECO:0007829" key="62">
    <source>
        <dbReference type="PDB" id="7ZVT"/>
    </source>
</evidence>
<evidence type="ECO:0007829" key="63">
    <source>
        <dbReference type="PDB" id="8AG4"/>
    </source>
</evidence>
<evidence type="ECO:0007829" key="64">
    <source>
        <dbReference type="PDB" id="8ASC"/>
    </source>
</evidence>
<comment type="function">
    <text evidence="6 7 15 33 38 41 43">Single-stranded DNA-dependent ATP-dependent helicase that plays a key role in DNA non-homologous end joining (NHEJ) by recruiting DNA-PK to DNA (PubMed:11493912, PubMed:12145306, PubMed:7957065, PubMed:8621488). Required for double-strand break repair and V(D)J recombination (PubMed:11493912, PubMed:12145306, PubMed:7957065, PubMed:8621488). Also has a role in chromosome translocation (PubMed:11493912, PubMed:12145306, PubMed:7957065, PubMed:8621488). The DNA helicase II complex binds preferentially to fork-like ends of double-stranded DNA in a cell cycle-dependent manner (PubMed:11493912, PubMed:12145306, PubMed:7957065, PubMed:8621488). It works in the 3'-5' direction (PubMed:11493912, PubMed:12145306, PubMed:7957065, PubMed:8621488). During NHEJ, the XRCC5-XRRC6 dimer performs the recognition step: it recognizes and binds to the broken ends of the DNA and protects them from further resection (PubMed:11493912, PubMed:12145306, PubMed:7957065, PubMed:8621488). Binding to DNA may be mediated by XRCC6 (PubMed:11493912, PubMed:12145306, PubMed:7957065, PubMed:8621488). The XRCC5-XRRC6 dimer acts as a regulatory subunit of the DNA-dependent protein kinase complex DNA-PK by increasing the affinity of the catalytic subunit PRKDC to DNA by 100-fold (PubMed:11493912, PubMed:12145306, PubMed:20383123, PubMed:7957065, PubMed:8621488). The XRCC5-XRRC6 dimer is probably involved in stabilizing broken DNA ends and bringing them together (PubMed:12145306, PubMed:20383123, PubMed:7957065, PubMed:8621488). The assembly of the DNA-PK complex to DNA ends is required for the NHEJ ligation step (PubMed:12145306, PubMed:20383123, PubMed:7957065, PubMed:8621488). The XRCC5-XRRC6 dimer probably also acts as a 5'-deoxyribose-5-phosphate lyase (5'-dRP lyase), by catalyzing the beta-elimination of the 5' deoxyribose-5-phosphate at an abasic site near double-strand breaks (PubMed:20383123). XRCC5 probably acts as the catalytic subunit of 5'-dRP activity, and allows to 'clean' the termini of abasic sites, a class of nucleotide damage commonly associated with strand breaks, before such broken ends can be joined (PubMed:20383123). The XRCC5-XRRC6 dimer together with APEX1 acts as a negative regulator of transcription (PubMed:8621488). In association with NAA15, the XRCC5-XRRC6 dimer binds to the osteocalcin promoter and activates osteocalcin expression (PubMed:12145306). As part of the DNA-PK complex, involved in the early steps of ribosome assembly by promoting the processing of precursor rRNA into mature 18S rRNA in the small-subunit processome (PubMed:32103174). Binding to U3 small nucleolar RNA, recruits PRKDC and XRCC5/Ku86 to the small-subunit processome (PubMed:32103174). Plays a role in the regulation of DNA virus-mediated innate immune response by assembling into the HDP-RNP complex, a complex that serves as a platform for IRF3 phosphorylation and subsequent innate immune response activation through the cGAS-STING pathway (PubMed:28712728).</text>
</comment>
<comment type="subunit">
    <text evidence="1 6 7 8 10 13 14 18 19 20 21 23 24 25 26 27 28 29 30 31 32 33 34 35 37 39 40 43">Heterodimer composed of XRCC5/Ku80 and XRCC6/Ku70; heterodimerization stabilizes XRCC5 protein (PubMed:11493912, PubMed:22442688, PubMed:25670504, PubMed:25941166, PubMed:35545041). Component of the core long-range non-homologous end joining (NHEJ) complex (also named DNA-PK complex) composed of PRKDC, LIG4, XRCC4, XRCC6/Ku70, XRCC5/Ku86 and NHEJ1/XLF (PubMed:11493912, PubMed:22442688, PubMed:25670504, PubMed:25941166, PubMed:33854234, PubMed:34352203). Additional component of the NHEJ complex includes PAXX (PubMed:25574025, PubMed:25670504, PubMed:25941166, PubMed:27601299). Following autophosphorylation, PRKDC dissociates from DNA, leading to formation of the short-range NHEJ complex, composed of LIG4, XRCC4, XRCC6/Ku70, XRCC5/Ku86 and NHEJ1/XLF (PubMed:33854234). The XRCC5-XRCC6 dimer also associates with NAA15, and this complex displays DNA binding activity towards the osteocalcin FGF response element (OCFRE) (PubMed:12145306). In addition, XRCC5 binds to the osteoblast-specific transcription factors MSX2 and RUNX2 (PubMed:12145306). Interacts with ELF3 (PubMed:15075319). Interacts with APLF (via KBM motif) (PubMed:17353262, PubMed:17396150, PubMed:23689425, PubMed:27063109, PubMed:31733588). The XRCC5/XRCC6 dimer associates in a DNA-dependent manner with APEX1 (PubMed:8621488). Identified in a complex with DEAF1 and XRCC6. Interacts with NR4A3; the DNA-dependent protein kinase complex DNA-PK phosphorylates and activates NR4A3 and prevents NR4A3 ubiquitinylation and degradation (PubMed:25852083). Interacts with RNF138 (PubMed:26502055). Interacts with CYREN isoform 1 (CYREN-1) and isoform 4 (CYREN-2) (via KBM motif) (PubMed:24610814, PubMed:27063109, PubMed:28959974). Interacts with WRN (via KBM motif) (PubMed:27063109). Interacts (via N-terminus) with HSF1 (via N-terminus); this interaction is direct and prevents XRCC5/XRCC6 heterodimeric binding and non-homologous end joining (NHEJ) repair activities induced by ionizing radiation (IR) (PubMed:26359349). Interacts with DHX9; this interaction occurs in a RNA-dependent manner (PubMed:14704337). Part of the HDP-RNP complex composed of at least HEXIM1, PRKDC, XRCC5, XRCC6, paraspeckle proteins (SFPQ, NONO, PSPC1, RBM14, and MATR3) and NEAT1 RNA (PubMed:28712728). Interacts with ERCC6 (PubMed:26030138). The XRCC5-XRCC6 dimer associates with ALKBH2. Interacts with TPRN; TPRN interacts with a number of DNA damage response proteins, is recruited to sites of DNA damage and may play a role in DNA damage repair (PubMed:23213405). Interacts with ERCC6L2 (By similarity).</text>
</comment>
<comment type="subunit">
    <text evidence="36">(Microbial infection) Interacts with human T-cell leukemia virus 1/HTLV-1 protein HBZ.</text>
</comment>
<comment type="interaction">
    <interactant intactId="EBI-357997">
        <id>P13010</id>
    </interactant>
    <interactant intactId="EBI-1256044">
        <id>Q8IW19</id>
        <label>APLF</label>
    </interactant>
    <organismsDiffer>false</organismsDiffer>
    <experiments>15</experiments>
</comment>
<comment type="interaction">
    <interactant intactId="EBI-357997">
        <id>P13010</id>
    </interactant>
    <interactant intactId="EBI-945751">
        <id>P38432</id>
        <label>COIL</label>
    </interactant>
    <organismsDiffer>false</organismsDiffer>
    <experiments>6</experiments>
</comment>
<comment type="interaction">
    <interactant intactId="EBI-357997">
        <id>P13010</id>
    </interactant>
    <interactant intactId="EBI-16749108">
        <id>Q96EV8-1</id>
        <label>DTNBP1</label>
    </interactant>
    <organismsDiffer>false</organismsDiffer>
    <experiments>2</experiments>
</comment>
<comment type="interaction">
    <interactant intactId="EBI-357997">
        <id>P13010</id>
    </interactant>
    <interactant intactId="EBI-2465479">
        <id>Q9H4A6</id>
        <label>GOLPH3</label>
    </interactant>
    <organismsDiffer>false</organismsDiffer>
    <experiments>2</experiments>
</comment>
<comment type="interaction">
    <interactant intactId="EBI-357997">
        <id>P13010</id>
    </interactant>
    <interactant intactId="EBI-1248457">
        <id>P09629</id>
        <label>HOXB7</label>
    </interactant>
    <organismsDiffer>false</organismsDiffer>
    <experiments>9</experiments>
</comment>
<comment type="interaction">
    <interactant intactId="EBI-357997">
        <id>P13010</id>
    </interactant>
    <interactant intactId="EBI-352682">
        <id>P04792</id>
        <label>HSPB1</label>
    </interactant>
    <organismsDiffer>false</organismsDiffer>
    <experiments>2</experiments>
</comment>
<comment type="interaction">
    <interactant intactId="EBI-357997">
        <id>P13010</id>
    </interactant>
    <interactant intactId="EBI-2839993">
        <id>Q9BUH6</id>
        <label>PAXX</label>
    </interactant>
    <organismsDiffer>false</organismsDiffer>
    <experiments>2</experiments>
</comment>
<comment type="interaction">
    <interactant intactId="EBI-357997">
        <id>P13010</id>
    </interactant>
    <interactant intactId="EBI-16137878">
        <id>Q9BUH6-1</id>
        <label>PAXX</label>
    </interactant>
    <organismsDiffer>false</organismsDiffer>
    <experiments>5</experiments>
</comment>
<comment type="interaction">
    <interactant intactId="EBI-357997">
        <id>P13010</id>
    </interactant>
    <interactant intactId="EBI-725702">
        <id>O15355</id>
        <label>PPM1G</label>
    </interactant>
    <organismsDiffer>false</organismsDiffer>
    <experiments>4</experiments>
</comment>
<comment type="interaction">
    <interactant intactId="EBI-357997">
        <id>P13010</id>
    </interactant>
    <interactant intactId="EBI-352053">
        <id>P78527</id>
        <label>PRKDC</label>
    </interactant>
    <organismsDiffer>false</organismsDiffer>
    <experiments>9</experiments>
</comment>
<comment type="interaction">
    <interactant intactId="EBI-357997">
        <id>P13010</id>
    </interactant>
    <interactant intactId="EBI-533224">
        <id>P15884</id>
        <label>TCF4</label>
    </interactant>
    <organismsDiffer>false</organismsDiffer>
    <experiments>2</experiments>
</comment>
<comment type="interaction">
    <interactant intactId="EBI-357997">
        <id>P13010</id>
    </interactant>
    <interactant intactId="EBI-1783169">
        <id>P13693</id>
        <label>TPT1</label>
    </interactant>
    <organismsDiffer>false</organismsDiffer>
    <experiments>4</experiments>
</comment>
<comment type="interaction">
    <interactant intactId="EBI-357997">
        <id>P13010</id>
    </interactant>
    <interactant intactId="EBI-353208">
        <id>P12956</id>
        <label>XRCC6</label>
    </interactant>
    <organismsDiffer>false</organismsDiffer>
    <experiments>23</experiments>
</comment>
<comment type="interaction">
    <interactant intactId="EBI-357997">
        <id>P13010</id>
    </interactant>
    <interactant intactId="EBI-527853">
        <id>Q9UGI0</id>
        <label>ZRANB1</label>
    </interactant>
    <organismsDiffer>false</organismsDiffer>
    <experiments>3</experiments>
</comment>
<comment type="subcellular location">
    <subcellularLocation>
        <location evidence="9 18 38">Nucleus</location>
    </subcellularLocation>
    <subcellularLocation>
        <location evidence="16 38">Nucleus</location>
        <location evidence="16 38">Nucleolus</location>
    </subcellularLocation>
    <subcellularLocation>
        <location evidence="18">Chromosome</location>
    </subcellularLocation>
</comment>
<comment type="developmental stage">
    <text evidence="42">Expression increases during promyelocyte differentiation.</text>
</comment>
<comment type="induction">
    <text>In osteoblasts, by FGF2.</text>
</comment>
<comment type="domain">
    <text evidence="12">The EEXXXDDL motif is required for the interaction with catalytic subunit PRKDC and its recruitment to sites of DNA damage.</text>
</comment>
<comment type="domain">
    <text evidence="2">The VWFA domain interacts with the KBM (Ku-binding motif) found in a number of DNA repair proteins.</text>
</comment>
<comment type="domain">
    <text evidence="2">The N-terminal and C-terminal regions are not required for binding to DNA or for degradation of the protein with only the central region being required for these processes.</text>
</comment>
<comment type="PTM">
    <text evidence="22">ADP-ribosylated by PARP3.</text>
</comment>
<comment type="PTM">
    <text evidence="5">Phosphorylated on serine residues. Phosphorylation by PRKDC may enhance helicase activity.</text>
</comment>
<comment type="PTM">
    <text evidence="11">Sumoylated.</text>
</comment>
<comment type="PTM">
    <text evidence="17 30">Ubiquitinated by RNF8 via 'Lys-48'-linked ubiquitination following DNA damage, leading to its degradation and removal from DNA damage sites (PubMed:22266820). Ubiquitinated by RNF138, leading to remove the Ku complex from DNA breaks (PubMed:26502055).</text>
</comment>
<comment type="miscellaneous">
    <text evidence="41">Individuals with systemic lupus erythematosus (SLE) and related disorders produce extremely large amounts of autoantibodies to XRCC6 and XRCC5.</text>
</comment>
<comment type="similarity">
    <text evidence="44">Belongs to the ku80 family.</text>
</comment>
<comment type="online information" name="Atlas of Genetics and Cytogenetics in Oncology and Haematology">
    <link uri="https://atlasgeneticsoncology.org/gene/337/XRCC5"/>
</comment>
<proteinExistence type="evidence at protein level"/>
<feature type="initiator methionine" description="Removed" evidence="41 42">
    <location>
        <position position="1"/>
    </location>
</feature>
<feature type="chain" id="PRO_0000084340" description="X-ray repair cross-complementing protein 5">
    <location>
        <begin position="2"/>
        <end position="732"/>
    </location>
</feature>
<feature type="domain" description="VWFA" evidence="4">
    <location>
        <begin position="9"/>
        <end position="231"/>
    </location>
</feature>
<feature type="domain" description="Ku" evidence="3">
    <location>
        <begin position="253"/>
        <end position="452"/>
    </location>
</feature>
<feature type="region of interest" description="Leucine-zipper">
    <location>
        <begin position="138"/>
        <end position="165"/>
    </location>
</feature>
<feature type="short sequence motif" description="EEXXXDL motif">
    <location>
        <begin position="720"/>
        <end position="728"/>
    </location>
</feature>
<feature type="modified residue" description="N6-acetyllysine" evidence="50">
    <location>
        <position position="144"/>
    </location>
</feature>
<feature type="modified residue" description="Phosphoserine" evidence="51">
    <location>
        <position position="255"/>
    </location>
</feature>
<feature type="modified residue" description="Phosphoserine" evidence="51">
    <location>
        <position position="258"/>
    </location>
</feature>
<feature type="modified residue" description="N6-acetyllysine" evidence="50">
    <location>
        <position position="265"/>
    </location>
</feature>
<feature type="modified residue" description="Phosphoserine" evidence="51">
    <location>
        <position position="318"/>
    </location>
</feature>
<feature type="modified residue" description="N6-acetyllysine" evidence="50">
    <location>
        <position position="332"/>
    </location>
</feature>
<feature type="modified residue" description="Phosphothreonine" evidence="51">
    <location>
        <position position="535"/>
    </location>
</feature>
<feature type="modified residue" description="Phosphoserine; by PRKDC" evidence="5 52">
    <location>
        <position position="577"/>
    </location>
</feature>
<feature type="modified residue" description="Phosphoserine; by PRKDC" evidence="45">
    <location>
        <position position="579"/>
    </location>
</feature>
<feature type="modified residue" description="Phosphoserine; by PRKDC" evidence="5">
    <location>
        <position position="580"/>
    </location>
</feature>
<feature type="modified residue" description="N6-acetyllysine" evidence="50">
    <location>
        <position position="660"/>
    </location>
</feature>
<feature type="modified residue" description="N6-acetyllysine" evidence="50">
    <location>
        <position position="665"/>
    </location>
</feature>
<feature type="modified residue" description="Phosphothreonine; by PRKDC" evidence="45">
    <location>
        <position position="715"/>
    </location>
</feature>
<feature type="cross-link" description="Glycyl lysine isopeptide (Lys-Gly) (interchain with G-Cter in SUMO2)" evidence="54">
    <location>
        <position position="195"/>
    </location>
</feature>
<feature type="cross-link" description="Glycyl lysine isopeptide (Lys-Gly) (interchain with G-Cter in SUMO2)" evidence="54">
    <location>
        <position position="532"/>
    </location>
</feature>
<feature type="cross-link" description="Glycyl lysine isopeptide (Lys-Gly) (interchain with G-Cter in SUMO2)" evidence="54">
    <location>
        <position position="534"/>
    </location>
</feature>
<feature type="cross-link" description="Glycyl lysine isopeptide (Lys-Gly) (interchain with G-Cter in SUMO2)" evidence="54">
    <location>
        <position position="566"/>
    </location>
</feature>
<feature type="cross-link" description="Glycyl lysine isopeptide (Lys-Gly) (interchain with G-Cter in SUMO2)" evidence="53 54">
    <location>
        <position position="568"/>
    </location>
</feature>
<feature type="cross-link" description="Glycyl lysine isopeptide (Lys-Gly) (interchain with G-Cter in SUMO2)" evidence="54">
    <location>
        <position position="669"/>
    </location>
</feature>
<feature type="cross-link" description="Glycyl lysine isopeptide (Lys-Gly) (interchain with G-Cter in SUMO2)" evidence="54">
    <location>
        <position position="688"/>
    </location>
</feature>
<feature type="sequence variant" id="VAR_014724" description="In dbSNP:rs1805380.">
    <original>L</original>
    <variation>F</variation>
    <location>
        <position position="463"/>
    </location>
</feature>
<feature type="sequence variant" id="VAR_053784" description="In dbSNP:rs2287558.">
    <original>I</original>
    <variation>V</variation>
    <location>
        <position position="508"/>
    </location>
</feature>
<feature type="mutagenesis site" description="Abolishes interaction with PRKDC and its recruitment to sites of DNA damage." evidence="12">
    <original>EE</original>
    <variation>AA</variation>
    <location>
        <begin position="720"/>
        <end position="721"/>
    </location>
</feature>
<feature type="mutagenesis site" description="Abolishes interaction with PRKDC and its recruitment to sites of DNA damage." evidence="12">
    <original>DD</original>
    <variation>AA</variation>
    <location>
        <begin position="726"/>
        <end position="727"/>
    </location>
</feature>
<feature type="sequence conflict" description="In Ref. 10; AA sequence." evidence="44" ref="10">
    <original>MDV</original>
    <variation>YSY</variation>
    <location>
        <begin position="14"/>
        <end position="16"/>
    </location>
</feature>
<feature type="sequence conflict" description="In Ref. 3; BAF83429." evidence="44" ref="3">
    <original>V</original>
    <variation>A</variation>
    <location>
        <position position="117"/>
    </location>
</feature>
<feature type="sequence conflict" description="In Ref. 4; BAD96323." evidence="44" ref="4">
    <original>I</original>
    <variation>V</variation>
    <location>
        <position position="134"/>
    </location>
</feature>
<feature type="sequence conflict" description="In Ref. 4; BAD96323." evidence="44" ref="4">
    <original>R</original>
    <variation>S</variation>
    <location>
        <position position="178"/>
    </location>
</feature>
<feature type="sequence conflict" description="In Ref. 11; CAA40736." evidence="44" ref="11">
    <original>R</original>
    <variation>L</variation>
    <location>
        <position position="315"/>
    </location>
</feature>
<feature type="sequence conflict" description="In Ref. 10; AA sequence." evidence="44" ref="10">
    <original>M</original>
    <variation>R</variation>
    <location>
        <position position="461"/>
    </location>
</feature>
<feature type="sequence conflict" description="In Ref. 10; AA sequence." evidence="44" ref="10">
    <original>T</original>
    <variation>G</variation>
    <location>
        <position position="479"/>
    </location>
</feature>
<feature type="sequence conflict" description="In Ref. 3; BAF83429." evidence="44" ref="3">
    <original>I</original>
    <variation>T</variation>
    <location>
        <position position="540"/>
    </location>
</feature>
<feature type="strand" evidence="63">
    <location>
        <begin position="8"/>
        <end position="15"/>
    </location>
</feature>
<feature type="helix" evidence="56">
    <location>
        <begin position="18"/>
        <end position="21"/>
    </location>
</feature>
<feature type="strand" evidence="60">
    <location>
        <begin position="25"/>
        <end position="27"/>
    </location>
</feature>
<feature type="helix" evidence="63">
    <location>
        <begin position="30"/>
        <end position="48"/>
    </location>
</feature>
<feature type="strand" evidence="63">
    <location>
        <begin position="53"/>
        <end position="60"/>
    </location>
</feature>
<feature type="strand" evidence="63">
    <location>
        <begin position="70"/>
        <end position="74"/>
    </location>
</feature>
<feature type="strand" evidence="63">
    <location>
        <begin position="76"/>
        <end position="84"/>
    </location>
</feature>
<feature type="helix" evidence="63">
    <location>
        <begin position="88"/>
        <end position="96"/>
    </location>
</feature>
<feature type="helix" evidence="63">
    <location>
        <begin position="107"/>
        <end position="121"/>
    </location>
</feature>
<feature type="strand" evidence="63">
    <location>
        <begin position="122"/>
        <end position="125"/>
    </location>
</feature>
<feature type="strand" evidence="63">
    <location>
        <begin position="128"/>
        <end position="135"/>
    </location>
</feature>
<feature type="helix" evidence="55">
    <location>
        <begin position="144"/>
        <end position="146"/>
    </location>
</feature>
<feature type="helix" evidence="63">
    <location>
        <begin position="147"/>
        <end position="157"/>
    </location>
</feature>
<feature type="strand" evidence="63">
    <location>
        <begin position="159"/>
        <end position="167"/>
    </location>
</feature>
<feature type="helix" evidence="64">
    <location>
        <begin position="170"/>
        <end position="174"/>
    </location>
</feature>
<feature type="strand" evidence="58">
    <location>
        <begin position="187"/>
        <end position="189"/>
    </location>
</feature>
<feature type="turn" evidence="56">
    <location>
        <begin position="194"/>
        <end position="196"/>
    </location>
</feature>
<feature type="helix" evidence="63">
    <location>
        <begin position="199"/>
        <end position="215"/>
    </location>
</feature>
<feature type="helix" evidence="63">
    <location>
        <begin position="218"/>
        <end position="223"/>
    </location>
</feature>
<feature type="strand" evidence="63">
    <location>
        <begin position="224"/>
        <end position="226"/>
    </location>
</feature>
<feature type="helix" evidence="63">
    <location>
        <begin position="227"/>
        <end position="230"/>
    </location>
</feature>
<feature type="helix" evidence="63">
    <location>
        <begin position="235"/>
        <end position="237"/>
    </location>
</feature>
<feature type="helix" evidence="56">
    <location>
        <begin position="238"/>
        <end position="240"/>
    </location>
</feature>
<feature type="strand" evidence="63">
    <location>
        <begin position="247"/>
        <end position="256"/>
    </location>
</feature>
<feature type="strand" evidence="63">
    <location>
        <begin position="258"/>
        <end position="267"/>
    </location>
</feature>
<feature type="strand" evidence="63">
    <location>
        <begin position="277"/>
        <end position="280"/>
    </location>
</feature>
<feature type="turn" evidence="63">
    <location>
        <begin position="281"/>
        <end position="283"/>
    </location>
</feature>
<feature type="helix" evidence="63">
    <location>
        <begin position="286"/>
        <end position="288"/>
    </location>
</feature>
<feature type="strand" evidence="63">
    <location>
        <begin position="289"/>
        <end position="293"/>
    </location>
</feature>
<feature type="strand" evidence="63">
    <location>
        <begin position="298"/>
        <end position="300"/>
    </location>
</feature>
<feature type="helix" evidence="63">
    <location>
        <begin position="307"/>
        <end position="309"/>
    </location>
</feature>
<feature type="strand" evidence="61">
    <location>
        <begin position="310"/>
        <end position="312"/>
    </location>
</feature>
<feature type="strand" evidence="63">
    <location>
        <begin position="313"/>
        <end position="315"/>
    </location>
</feature>
<feature type="strand" evidence="63">
    <location>
        <begin position="320"/>
        <end position="322"/>
    </location>
</feature>
<feature type="helix" evidence="63">
    <location>
        <begin position="323"/>
        <end position="325"/>
    </location>
</feature>
<feature type="turn" evidence="63">
    <location>
        <begin position="328"/>
        <end position="330"/>
    </location>
</feature>
<feature type="strand" evidence="63">
    <location>
        <begin position="338"/>
        <end position="347"/>
    </location>
</feature>
<feature type="helix" evidence="63">
    <location>
        <begin position="348"/>
        <end position="350"/>
    </location>
</feature>
<feature type="helix" evidence="63">
    <location>
        <begin position="353"/>
        <end position="355"/>
    </location>
</feature>
<feature type="strand" evidence="63">
    <location>
        <begin position="357"/>
        <end position="366"/>
    </location>
</feature>
<feature type="strand" evidence="61">
    <location>
        <begin position="368"/>
        <end position="370"/>
    </location>
</feature>
<feature type="helix" evidence="63">
    <location>
        <begin position="371"/>
        <end position="387"/>
    </location>
</feature>
<feature type="strand" evidence="63">
    <location>
        <begin position="389"/>
        <end position="401"/>
    </location>
</feature>
<feature type="strand" evidence="63">
    <location>
        <begin position="404"/>
        <end position="412"/>
    </location>
</feature>
<feature type="strand" evidence="63">
    <location>
        <begin position="417"/>
        <end position="424"/>
    </location>
</feature>
<feature type="helix" evidence="63">
    <location>
        <begin position="427"/>
        <end position="429"/>
    </location>
</feature>
<feature type="strand" evidence="55">
    <location>
        <begin position="438"/>
        <end position="440"/>
    </location>
</feature>
<feature type="strand" evidence="56">
    <location>
        <begin position="442"/>
        <end position="444"/>
    </location>
</feature>
<feature type="helix" evidence="63">
    <location>
        <begin position="448"/>
        <end position="460"/>
    </location>
</feature>
<feature type="strand" evidence="62">
    <location>
        <begin position="462"/>
        <end position="465"/>
    </location>
</feature>
<feature type="helix" evidence="63">
    <location>
        <begin position="467"/>
        <end position="469"/>
    </location>
</feature>
<feature type="strand" evidence="63">
    <location>
        <begin position="474"/>
        <end position="476"/>
    </location>
</feature>
<feature type="helix" evidence="63">
    <location>
        <begin position="479"/>
        <end position="481"/>
    </location>
</feature>
<feature type="helix" evidence="63">
    <location>
        <begin position="485"/>
        <end position="499"/>
    </location>
</feature>
<feature type="strand" evidence="55">
    <location>
        <begin position="501"/>
        <end position="503"/>
    </location>
</feature>
<feature type="helix" evidence="63">
    <location>
        <begin position="510"/>
        <end position="515"/>
    </location>
</feature>
<feature type="helix" evidence="63">
    <location>
        <begin position="520"/>
        <end position="536"/>
    </location>
</feature>
<feature type="strand" evidence="58">
    <location>
        <begin position="540"/>
        <end position="542"/>
    </location>
</feature>
<feature type="helix" evidence="60">
    <location>
        <begin position="550"/>
        <end position="553"/>
    </location>
</feature>
<feature type="helix" evidence="59">
    <location>
        <begin position="578"/>
        <end position="580"/>
    </location>
</feature>
<feature type="strand" evidence="57">
    <location>
        <begin position="581"/>
        <end position="586"/>
    </location>
</feature>
<feature type="strand" evidence="57">
    <location>
        <begin position="588"/>
        <end position="592"/>
    </location>
</feature>
<feature type="helix" evidence="60">
    <location>
        <begin position="597"/>
        <end position="604"/>
    </location>
</feature>
<feature type="strand" evidence="60">
    <location>
        <begin position="607"/>
        <end position="609"/>
    </location>
</feature>
<feature type="helix" evidence="60">
    <location>
        <begin position="613"/>
        <end position="625"/>
    </location>
</feature>
<feature type="helix" evidence="60">
    <location>
        <begin position="629"/>
        <end position="648"/>
    </location>
</feature>
<feature type="helix" evidence="60">
    <location>
        <begin position="652"/>
        <end position="668"/>
    </location>
</feature>
<feature type="helix" evidence="60">
    <location>
        <begin position="673"/>
        <end position="681"/>
    </location>
</feature>
<feature type="strand" evidence="60">
    <location>
        <begin position="688"/>
        <end position="692"/>
    </location>
</feature>
<feature type="helix" evidence="60">
    <location>
        <begin position="700"/>
        <end position="704"/>
    </location>
</feature>
<feature type="helix" evidence="60">
    <location>
        <begin position="725"/>
        <end position="730"/>
    </location>
</feature>
<reference key="1">
    <citation type="journal article" date="1989" name="J. Biol. Chem.">
        <title>cDNA-derived amino acid sequence of the 86-kDa subunit of the Ku antigen.</title>
        <authorList>
            <person name="Yaneva M."/>
            <person name="Wen J."/>
            <person name="Ayala A."/>
            <person name="Cook R."/>
        </authorList>
    </citation>
    <scope>NUCLEOTIDE SEQUENCE [MRNA]</scope>
    <scope>PROTEIN SEQUENCE OF 4-22</scope>
</reference>
<reference key="2">
    <citation type="journal article" date="1990" name="Proc. Natl. Acad. Sci. U.S.A.">
        <title>Isolation and characterization of cDNA encoding the 80-kDa subunit protein of the human autoantigen Ku (p70/p80) recognized by autoantibodies from patients with scleroderma-polymyositis overlap syndrome.</title>
        <authorList>
            <person name="Mimori T."/>
            <person name="Ohosone Y."/>
            <person name="Hama N."/>
            <person name="Suwa A."/>
            <person name="Akizuki M."/>
            <person name="Homma M."/>
            <person name="Griffith A.J."/>
            <person name="Hardin J.A."/>
        </authorList>
    </citation>
    <scope>NUCLEOTIDE SEQUENCE [MRNA]</scope>
</reference>
<reference key="3">
    <citation type="journal article" date="2004" name="Nat. Genet.">
        <title>Complete sequencing and characterization of 21,243 full-length human cDNAs.</title>
        <authorList>
            <person name="Ota T."/>
            <person name="Suzuki Y."/>
            <person name="Nishikawa T."/>
            <person name="Otsuki T."/>
            <person name="Sugiyama T."/>
            <person name="Irie R."/>
            <person name="Wakamatsu A."/>
            <person name="Hayashi K."/>
            <person name="Sato H."/>
            <person name="Nagai K."/>
            <person name="Kimura K."/>
            <person name="Makita H."/>
            <person name="Sekine M."/>
            <person name="Obayashi M."/>
            <person name="Nishi T."/>
            <person name="Shibahara T."/>
            <person name="Tanaka T."/>
            <person name="Ishii S."/>
            <person name="Yamamoto J."/>
            <person name="Saito K."/>
            <person name="Kawai Y."/>
            <person name="Isono Y."/>
            <person name="Nakamura Y."/>
            <person name="Nagahari K."/>
            <person name="Murakami K."/>
            <person name="Yasuda T."/>
            <person name="Iwayanagi T."/>
            <person name="Wagatsuma M."/>
            <person name="Shiratori A."/>
            <person name="Sudo H."/>
            <person name="Hosoiri T."/>
            <person name="Kaku Y."/>
            <person name="Kodaira H."/>
            <person name="Kondo H."/>
            <person name="Sugawara M."/>
            <person name="Takahashi M."/>
            <person name="Kanda K."/>
            <person name="Yokoi T."/>
            <person name="Furuya T."/>
            <person name="Kikkawa E."/>
            <person name="Omura Y."/>
            <person name="Abe K."/>
            <person name="Kamihara K."/>
            <person name="Katsuta N."/>
            <person name="Sato K."/>
            <person name="Tanikawa M."/>
            <person name="Yamazaki M."/>
            <person name="Ninomiya K."/>
            <person name="Ishibashi T."/>
            <person name="Yamashita H."/>
            <person name="Murakawa K."/>
            <person name="Fujimori K."/>
            <person name="Tanai H."/>
            <person name="Kimata M."/>
            <person name="Watanabe M."/>
            <person name="Hiraoka S."/>
            <person name="Chiba Y."/>
            <person name="Ishida S."/>
            <person name="Ono Y."/>
            <person name="Takiguchi S."/>
            <person name="Watanabe S."/>
            <person name="Yosida M."/>
            <person name="Hotuta T."/>
            <person name="Kusano J."/>
            <person name="Kanehori K."/>
            <person name="Takahashi-Fujii A."/>
            <person name="Hara H."/>
            <person name="Tanase T.-O."/>
            <person name="Nomura Y."/>
            <person name="Togiya S."/>
            <person name="Komai F."/>
            <person name="Hara R."/>
            <person name="Takeuchi K."/>
            <person name="Arita M."/>
            <person name="Imose N."/>
            <person name="Musashino K."/>
            <person name="Yuuki H."/>
            <person name="Oshima A."/>
            <person name="Sasaki N."/>
            <person name="Aotsuka S."/>
            <person name="Yoshikawa Y."/>
            <person name="Matsunawa H."/>
            <person name="Ichihara T."/>
            <person name="Shiohata N."/>
            <person name="Sano S."/>
            <person name="Moriya S."/>
            <person name="Momiyama H."/>
            <person name="Satoh N."/>
            <person name="Takami S."/>
            <person name="Terashima Y."/>
            <person name="Suzuki O."/>
            <person name="Nakagawa S."/>
            <person name="Senoh A."/>
            <person name="Mizoguchi H."/>
            <person name="Goto Y."/>
            <person name="Shimizu F."/>
            <person name="Wakebe H."/>
            <person name="Hishigaki H."/>
            <person name="Watanabe T."/>
            <person name="Sugiyama A."/>
            <person name="Takemoto M."/>
            <person name="Kawakami B."/>
            <person name="Yamazaki M."/>
            <person name="Watanabe K."/>
            <person name="Kumagai A."/>
            <person name="Itakura S."/>
            <person name="Fukuzumi Y."/>
            <person name="Fujimori Y."/>
            <person name="Komiyama M."/>
            <person name="Tashiro H."/>
            <person name="Tanigami A."/>
            <person name="Fujiwara T."/>
            <person name="Ono T."/>
            <person name="Yamada K."/>
            <person name="Fujii Y."/>
            <person name="Ozaki K."/>
            <person name="Hirao M."/>
            <person name="Ohmori Y."/>
            <person name="Kawabata A."/>
            <person name="Hikiji T."/>
            <person name="Kobatake N."/>
            <person name="Inagaki H."/>
            <person name="Ikema Y."/>
            <person name="Okamoto S."/>
            <person name="Okitani R."/>
            <person name="Kawakami T."/>
            <person name="Noguchi S."/>
            <person name="Itoh T."/>
            <person name="Shigeta K."/>
            <person name="Senba T."/>
            <person name="Matsumura K."/>
            <person name="Nakajima Y."/>
            <person name="Mizuno T."/>
            <person name="Morinaga M."/>
            <person name="Sasaki M."/>
            <person name="Togashi T."/>
            <person name="Oyama M."/>
            <person name="Hata H."/>
            <person name="Watanabe M."/>
            <person name="Komatsu T."/>
            <person name="Mizushima-Sugano J."/>
            <person name="Satoh T."/>
            <person name="Shirai Y."/>
            <person name="Takahashi Y."/>
            <person name="Nakagawa K."/>
            <person name="Okumura K."/>
            <person name="Nagase T."/>
            <person name="Nomura N."/>
            <person name="Kikuchi H."/>
            <person name="Masuho Y."/>
            <person name="Yamashita R."/>
            <person name="Nakai K."/>
            <person name="Yada T."/>
            <person name="Nakamura Y."/>
            <person name="Ohara O."/>
            <person name="Isogai T."/>
            <person name="Sugano S."/>
        </authorList>
    </citation>
    <scope>NUCLEOTIDE SEQUENCE [LARGE SCALE MRNA]</scope>
    <source>
        <tissue>Neuroblastoma</tissue>
    </source>
</reference>
<reference key="4">
    <citation type="submission" date="2005-04" db="EMBL/GenBank/DDBJ databases">
        <authorList>
            <person name="Suzuki Y."/>
            <person name="Sugano S."/>
            <person name="Totoki Y."/>
            <person name="Toyoda A."/>
            <person name="Takeda T."/>
            <person name="Sakaki Y."/>
            <person name="Tanaka A."/>
            <person name="Yokoyama S."/>
        </authorList>
    </citation>
    <scope>NUCLEOTIDE SEQUENCE [LARGE SCALE MRNA]</scope>
    <source>
        <tissue>Coronary artery</tissue>
    </source>
</reference>
<reference key="5">
    <citation type="submission" date="2006-06" db="EMBL/GenBank/DDBJ databases">
        <authorList>
            <consortium name="NIEHS SNPs program"/>
        </authorList>
    </citation>
    <scope>NUCLEOTIDE SEQUENCE [GENOMIC DNA]</scope>
</reference>
<reference key="6">
    <citation type="submission" date="2005-07" db="EMBL/GenBank/DDBJ databases">
        <authorList>
            <person name="Mural R.J."/>
            <person name="Istrail S."/>
            <person name="Sutton G.G."/>
            <person name="Florea L."/>
            <person name="Halpern A.L."/>
            <person name="Mobarry C.M."/>
            <person name="Lippert R."/>
            <person name="Walenz B."/>
            <person name="Shatkay H."/>
            <person name="Dew I."/>
            <person name="Miller J.R."/>
            <person name="Flanigan M.J."/>
            <person name="Edwards N.J."/>
            <person name="Bolanos R."/>
            <person name="Fasulo D."/>
            <person name="Halldorsson B.V."/>
            <person name="Hannenhalli S."/>
            <person name="Turner R."/>
            <person name="Yooseph S."/>
            <person name="Lu F."/>
            <person name="Nusskern D.R."/>
            <person name="Shue B.C."/>
            <person name="Zheng X.H."/>
            <person name="Zhong F."/>
            <person name="Delcher A.L."/>
            <person name="Huson D.H."/>
            <person name="Kravitz S.A."/>
            <person name="Mouchard L."/>
            <person name="Reinert K."/>
            <person name="Remington K.A."/>
            <person name="Clark A.G."/>
            <person name="Waterman M.S."/>
            <person name="Eichler E.E."/>
            <person name="Adams M.D."/>
            <person name="Hunkapiller M.W."/>
            <person name="Myers E.W."/>
            <person name="Venter J.C."/>
        </authorList>
    </citation>
    <scope>NUCLEOTIDE SEQUENCE [LARGE SCALE GENOMIC DNA]</scope>
</reference>
<reference key="7">
    <citation type="journal article" date="2004" name="Genome Res.">
        <title>The status, quality, and expansion of the NIH full-length cDNA project: the Mammalian Gene Collection (MGC).</title>
        <authorList>
            <consortium name="The MGC Project Team"/>
        </authorList>
    </citation>
    <scope>NUCLEOTIDE SEQUENCE [LARGE SCALE MRNA]</scope>
    <source>
        <tissue>Thyroid</tissue>
        <tissue>Uterus</tissue>
    </source>
</reference>
<reference key="8">
    <citation type="journal article" date="1990" name="J. Biol. Chem.">
        <title>Purification and characterization of proximal sequence element-binding protein 1, a transcription activating protein related to Ku and TREF that binds the proximal sequence element of the human U1 promoter.</title>
        <authorList>
            <person name="Knuth M.W."/>
            <person name="Gunderson S.I."/>
            <person name="Thompson N.E."/>
            <person name="Strasheim L.A."/>
            <person name="Burgess R.R."/>
        </authorList>
    </citation>
    <scope>NUCLEOTIDE SEQUENCE [MRNA] OF 1-22</scope>
</reference>
<reference key="9">
    <citation type="journal article" date="1994" name="EMBO J.">
        <title>Human DNA helicase II: a novel DNA unwinding enzyme identified as the Ku autoantigen.</title>
        <authorList>
            <person name="Tuteja N."/>
            <person name="Tuteja R."/>
            <person name="Ochem A."/>
            <person name="Taneja P."/>
            <person name="Huang N.W."/>
            <person name="Simoncsits A."/>
            <person name="Susic S."/>
            <person name="Rahman K."/>
            <person name="Marusic L."/>
            <person name="Chen J."/>
            <person name="Zhang J."/>
            <person name="Wang S."/>
            <person name="Pongor S."/>
            <person name="Falaschi A."/>
        </authorList>
    </citation>
    <scope>PROTEIN SEQUENCE OF 2-20</scope>
    <scope>FUNCTION</scope>
    <scope>INVOLVEMENT IN LUPUS ERYTHEMATOSUS</scope>
</reference>
<reference key="10">
    <citation type="journal article" date="1996" name="FEBS Lett.">
        <title>Non-histone protein 1 (NHP1) is a member of the Ku protein family which is upregulated in differentiating mouse myoblasts and human promyelocytes.</title>
        <authorList>
            <person name="Oderwald H."/>
            <person name="Hughes M.J."/>
            <person name="Jost J.-P."/>
        </authorList>
    </citation>
    <scope>PROTEIN SEQUENCE OF 2-16; 98-113; 443-461 AND 473-479</scope>
    <scope>DEVELOPMENTAL STAGE</scope>
    <source>
        <tissue>Cervix carcinoma</tissue>
    </source>
</reference>
<reference key="11">
    <citation type="journal article" date="1990" name="J. Exp. Med.">
        <title>The autoantigen Ku is indistinguishable from NF IV, a protein forming multimeric protein-DNA complexes.</title>
        <authorList>
            <person name="Stuiver M.H."/>
            <person name="Coenjaerts F.E.J."/>
            <person name="van der Vlied P.C."/>
        </authorList>
    </citation>
    <scope>NUCLEOTIDE SEQUENCE [MRNA] OF 105-732</scope>
    <scope>PARTIAL PROTEIN SEQUENCE</scope>
</reference>
<reference key="12">
    <citation type="journal article" date="1994" name="Biochemistry">
        <title>DNA-dependent ATPase from HeLa cells is related to human Ku autoantigen.</title>
        <authorList>
            <person name="Cao Q.P."/>
            <person name="Pitt S."/>
            <person name="Leszyk J."/>
            <person name="Baril E.F."/>
        </authorList>
    </citation>
    <scope>PROTEIN SEQUENCE OF 186-193; 317-326; 545-559 AND 656-661</scope>
</reference>
<reference key="13">
    <citation type="journal article" date="1996" name="J. Biol. Chem.">
        <title>The interaction between Ku antigen and REF1 protein mediates negative gene regulation by extracellular calcium.</title>
        <authorList>
            <person name="Chung U."/>
            <person name="Igarashi T."/>
            <person name="Nishishita T."/>
            <person name="Iwanari H."/>
            <person name="Iwamatsu A."/>
            <person name="Suwa A."/>
            <person name="Mimori T."/>
            <person name="Hata K."/>
            <person name="Ebisu S."/>
            <person name="Ogata E."/>
            <person name="Fujita T."/>
            <person name="Okazaki T."/>
        </authorList>
    </citation>
    <scope>PROTEIN SEQUENCE OF 526-531; 535-542 AND 704-708</scope>
    <scope>FUNCTION</scope>
    <scope>INTERACTION WITH APEX1</scope>
</reference>
<reference key="14">
    <citation type="journal article" date="1992" name="J. Biol. Chem.">
        <title>Identification of proteins binding to interferon-inducible transcriptional enhancers in hematopoietic cells.</title>
        <authorList>
            <person name="Wedrychowski A."/>
            <person name="Henzel W."/>
            <person name="Huston L."/>
            <person name="Paslidis N."/>
            <person name="Ellerson D."/>
            <person name="McRae M."/>
            <person name="Seong D."/>
            <person name="Howard O.M.Z."/>
            <person name="Deisseroth A."/>
        </authorList>
    </citation>
    <scope>PROTEIN SEQUENCE OF 526-565 AND 709-732</scope>
</reference>
<reference key="15">
    <citation type="journal article" date="1995" name="EMBO J.">
        <title>Purification of the sequence-specific transcription factor CTCBF, involved in the control of human collagen IV genes: subunits with homology to Ku antigen.</title>
        <authorList>
            <person name="Genersch E."/>
            <person name="Eckerskorn C."/>
            <person name="Lottspeich F."/>
            <person name="Herzog C."/>
            <person name="Kuehn K."/>
            <person name="Poeschl E."/>
        </authorList>
    </citation>
    <scope>PROTEIN SEQUENCE OF 534-542</scope>
</reference>
<reference key="16">
    <citation type="journal article" date="1999" name="Biochemistry">
        <title>DNA-dependent protein kinase phosphorylation sites in Ku 70/80 heterodimer.</title>
        <authorList>
            <person name="Chan D.W."/>
            <person name="Ye R."/>
            <person name="Veillette C.J."/>
            <person name="Lees-Miller S.P."/>
        </authorList>
    </citation>
    <scope>PHOSPHORYLATION AT SER-577; SER-579; SER-580 AND THR-715</scope>
</reference>
<reference key="17">
    <citation type="journal article" date="2002" name="J. Biol. Chem.">
        <title>Regulation of osteocalcin gene expression by a novel Ku antigen transcription factor complex.</title>
        <authorList>
            <person name="Willis D.M."/>
            <person name="Loewy A.P."/>
            <person name="Charlton-Kachigian N."/>
            <person name="Shao J.-S."/>
            <person name="Ornitz D.M."/>
            <person name="Towler D.A."/>
        </authorList>
    </citation>
    <scope>IDENTIFICATION BY MASS SPECTROMETRY</scope>
    <scope>FUNCTION</scope>
    <scope>INTERACTION WITH NAA15; MSX2 AND RUNX2</scope>
    <source>
        <tissue>Heart</tissue>
        <tissue>Osteoblast</tissue>
    </source>
</reference>
<reference key="18">
    <citation type="journal article" date="2004" name="J. Biol. Chem.">
        <title>Positive and negative modulation of the transcriptional activity of the ETS factor ESE-1 through interaction with p300, CREB-binding protein, and Ku 70/86.</title>
        <authorList>
            <person name="Wang H."/>
            <person name="Fang R."/>
            <person name="Cho J.-Y."/>
            <person name="Libermann T.A."/>
            <person name="Oettgen P."/>
        </authorList>
    </citation>
    <scope>INTERACTION WITH ELF3</scope>
</reference>
<reference key="19">
    <citation type="journal article" date="2004" name="Nucleic Acids Res.">
        <title>DNA-dependent protein kinase (DNA-PK) phosphorylates nuclear DNA helicase II/RNA helicase A and hnRNP proteins in an RNA-dependent manner.</title>
        <authorList>
            <person name="Zhang S."/>
            <person name="Schlott B."/>
            <person name="Goerlach M."/>
            <person name="Grosse F."/>
        </authorList>
    </citation>
    <scope>INTERACTION WITH DHX9</scope>
</reference>
<reference key="20">
    <citation type="journal article" date="2005" name="J. Biol. Chem.">
        <title>Systematic identification and analysis of mammalian small ubiquitin-like modifier substrates.</title>
        <authorList>
            <person name="Gocke C.B."/>
            <person name="Yu H."/>
            <person name="Kang J."/>
        </authorList>
    </citation>
    <scope>SUMOYLATION</scope>
</reference>
<reference key="21">
    <citation type="journal article" date="2005" name="Nature">
        <title>Conserved modes of recruitment of ATM, ATR and DNA-PKcs to sites of DNA damage.</title>
        <authorList>
            <person name="Falck J."/>
            <person name="Coates J."/>
            <person name="Jackson S.P."/>
        </authorList>
    </citation>
    <scope>DOMAIN</scope>
    <scope>MUTAGENESIS OF 720-GLU-GLU-721 AND 726-ASP-ASP-727</scope>
</reference>
<reference key="22">
    <citation type="journal article" date="2007" name="EMBO J.">
        <title>A novel human AP endonuclease with conserved zinc-finger-like motifs involved in DNA strand break responses.</title>
        <authorList>
            <person name="Kanno S."/>
            <person name="Kuzuoka H."/>
            <person name="Sasao S."/>
            <person name="Hong Z."/>
            <person name="Lan L."/>
            <person name="Nakajima S."/>
            <person name="Yasui A."/>
        </authorList>
    </citation>
    <scope>INTERACTION WITH APLF</scope>
</reference>
<reference key="23">
    <citation type="journal article" date="2007" name="Mol. Cell. Biol.">
        <title>APLF (C2orf13) is a novel human protein involved in the cellular response to chromosomal DNA strand breaks.</title>
        <authorList>
            <person name="Iles N."/>
            <person name="Rulten S."/>
            <person name="El-Khamisy S.F."/>
            <person name="Caldecott K.W."/>
        </authorList>
    </citation>
    <scope>INTERACTION WITH APLF</scope>
</reference>
<reference key="24">
    <citation type="journal article" date="2009" name="Sci. Signal.">
        <title>Quantitative phosphoproteomic analysis of T cell receptor signaling reveals system-wide modulation of protein-protein interactions.</title>
        <authorList>
            <person name="Mayya V."/>
            <person name="Lundgren D.H."/>
            <person name="Hwang S.-I."/>
            <person name="Rezaul K."/>
            <person name="Wu L."/>
            <person name="Eng J.K."/>
            <person name="Rodionov V."/>
            <person name="Han D.K."/>
        </authorList>
    </citation>
    <scope>IDENTIFICATION BY MASS SPECTROMETRY [LARGE SCALE ANALYSIS]</scope>
    <source>
        <tissue>Leukemic T-cell</tissue>
    </source>
</reference>
<reference key="25">
    <citation type="journal article" date="2009" name="Science">
        <title>Lysine acetylation targets protein complexes and co-regulates major cellular functions.</title>
        <authorList>
            <person name="Choudhary C."/>
            <person name="Kumar C."/>
            <person name="Gnad F."/>
            <person name="Nielsen M.L."/>
            <person name="Rehman M."/>
            <person name="Walther T.C."/>
            <person name="Olsen J.V."/>
            <person name="Mann M."/>
        </authorList>
    </citation>
    <scope>ACETYLATION [LARGE SCALE ANALYSIS] AT LYS-144; LYS-265; LYS-332; LYS-660 AND LYS-665</scope>
    <scope>IDENTIFICATION BY MASS SPECTROMETRY [LARGE SCALE ANALYSIS]</scope>
</reference>
<reference key="26">
    <citation type="journal article" date="2012" name="Biol. Open">
        <title>Taperin (c9orf75), a mutated gene in nonsyndromic deafness, encodes a vertebrate specific, nuclear localized protein phosphatase one alpha (PP1alpha) docking protein.</title>
        <authorList>
            <person name="Ferrar T."/>
            <person name="Chamousset D."/>
            <person name="De Wever V."/>
            <person name="Nimick M."/>
            <person name="Andersen J."/>
            <person name="Trinkle-Mulcahy L."/>
            <person name="Moorhead G.B."/>
        </authorList>
    </citation>
    <scope>INTERACTION WITH TPRN</scope>
</reference>
<reference key="27">
    <citation type="journal article" date="2013" name="Cell Rep.">
        <title>ABH2 couples regulation of ribosomal DNA transcription with DNA alkylation repair.</title>
        <authorList>
            <person name="Li P."/>
            <person name="Gao S."/>
            <person name="Wang L."/>
            <person name="Yu F."/>
            <person name="Li J."/>
            <person name="Wang C."/>
            <person name="Li J."/>
            <person name="Wong J."/>
        </authorList>
    </citation>
    <scope>INTERACTION WITH ALKBH2</scope>
</reference>
<reference key="28">
    <citation type="journal article" date="2013" name="J. Biol. Chem.">
        <title>Identification and functional characterization of a Ku-binding motif in aprataxin polynucleotide kinase/phosphatase-like factor (APLF).</title>
        <authorList>
            <person name="Shirodkar P."/>
            <person name="Fenton A.L."/>
            <person name="Meng L."/>
            <person name="Koch C.A."/>
        </authorList>
    </citation>
    <scope>INTERACTION WITH APLF</scope>
</reference>
<reference key="29">
    <citation type="journal article" date="2016" name="Nat. Commun.">
        <title>The Ku-binding motif is a conserved module for recruitment and stimulation of non-homologous end-joining proteins.</title>
        <authorList>
            <person name="Grundy G.J."/>
            <person name="Rulten S.L."/>
            <person name="Arribas-Bosacoma R."/>
            <person name="Davidson K."/>
            <person name="Kozik Z."/>
            <person name="Oliver A.W."/>
            <person name="Pearl L.H."/>
            <person name="Caldecott K.W."/>
        </authorList>
    </citation>
    <scope>INTERACTION WITH APLF; WRN AND CYREN</scope>
</reference>
<reference key="30">
    <citation type="journal article" date="2010" name="Nature">
        <title>Ku is a 5'-dRP/AP lyase that excises nucleotide damage near broken ends.</title>
        <authorList>
            <person name="Roberts S.A."/>
            <person name="Strande N."/>
            <person name="Burkhalter M.D."/>
            <person name="Strom C."/>
            <person name="Havener J.M."/>
            <person name="Hasty P."/>
            <person name="Ramsden D.A."/>
        </authorList>
    </citation>
    <scope>FUNCTION</scope>
</reference>
<reference key="31">
    <citation type="journal article" date="2011" name="BMC Syst. Biol.">
        <title>Initial characterization of the human central proteome.</title>
        <authorList>
            <person name="Burkard T.R."/>
            <person name="Planyavsky M."/>
            <person name="Kaupe I."/>
            <person name="Breitwieser F.P."/>
            <person name="Buerckstuemmer T."/>
            <person name="Bennett K.L."/>
            <person name="Superti-Furga G."/>
            <person name="Colinge J."/>
        </authorList>
    </citation>
    <scope>IDENTIFICATION BY MASS SPECTROMETRY [LARGE SCALE ANALYSIS]</scope>
</reference>
<reference key="32">
    <citation type="journal article" date="2012" name="Mol. Cell. Proteomics">
        <title>Systematic analysis of protein pools, isoforms, and modifications affecting turnover and subcellular localization.</title>
        <authorList>
            <person name="Ahmad Y."/>
            <person name="Boisvert F.M."/>
            <person name="Lundberg E."/>
            <person name="Uhlen M."/>
            <person name="Lamond A.I."/>
        </authorList>
    </citation>
    <scope>SUBCELLULAR LOCATION [LARGE SCALE ANALYSIS]</scope>
</reference>
<reference key="33">
    <citation type="journal article" date="2012" name="PLoS ONE">
        <title>Deformed epidermal autoregulatory factor-1 (DEAF1) interacts with the Ku70 subunit of the DNA-dependent protein kinase complex.</title>
        <authorList>
            <person name="Jensik P.J."/>
            <person name="Huggenvik J.I."/>
            <person name="Collard M.W."/>
        </authorList>
    </citation>
    <scope>DNA-BINDING</scope>
    <scope>IDENTIFICATION IN A COMPLEX WITH XRCC6 AND DEAF1</scope>
    <scope>SUBCELLULAR LOCATION</scope>
    <scope>IDENTIFICATION BY MASS SPECTROMETRY</scope>
</reference>
<reference key="34">
    <citation type="journal article" date="2012" name="Nat. Struct. Mol. Biol.">
        <title>The E3 ligase RNF8 regulates KU80 removal and NHEJ repair.</title>
        <authorList>
            <person name="Feng L."/>
            <person name="Chen J."/>
        </authorList>
    </citation>
    <scope>UBIQUITINATION BY RNF8</scope>
</reference>
<reference key="35">
    <citation type="journal article" date="2013" name="J. Proteome Res.">
        <title>Toward a comprehensive characterization of a human cancer cell phosphoproteome.</title>
        <authorList>
            <person name="Zhou H."/>
            <person name="Di Palma S."/>
            <person name="Preisinger C."/>
            <person name="Peng M."/>
            <person name="Polat A.N."/>
            <person name="Heck A.J."/>
            <person name="Mohammed S."/>
        </authorList>
    </citation>
    <scope>PHOSPHORYLATION [LARGE SCALE ANALYSIS] AT SER-255; SER-258; SER-318 AND THR-535</scope>
    <scope>IDENTIFICATION BY MASS SPECTROMETRY [LARGE SCALE ANALYSIS]</scope>
    <source>
        <tissue>Cervix carcinoma</tissue>
        <tissue>Erythroleukemia</tissue>
    </source>
</reference>
<reference key="36">
    <citation type="journal article" date="2014" name="J. Biol. Chem.">
        <title>A human short open reading frame (sORF)-encoded polypeptide that stimulates DNA end joining.</title>
        <authorList>
            <person name="Slavoff S.A."/>
            <person name="Heo J."/>
            <person name="Budnik B.A."/>
            <person name="Hanakahi L.A."/>
            <person name="Saghatelian A."/>
        </authorList>
    </citation>
    <scope>INTERACTION WITH CYREN</scope>
</reference>
<reference key="37">
    <citation type="journal article" date="2014" name="J. Proteomics">
        <title>An enzyme assisted RP-RPLC approach for in-depth analysis of human liver phosphoproteome.</title>
        <authorList>
            <person name="Bian Y."/>
            <person name="Song C."/>
            <person name="Cheng K."/>
            <person name="Dong M."/>
            <person name="Wang F."/>
            <person name="Huang J."/>
            <person name="Sun D."/>
            <person name="Wang L."/>
            <person name="Ye M."/>
            <person name="Zou H."/>
        </authorList>
    </citation>
    <scope>PHOSPHORYLATION [LARGE SCALE ANALYSIS] AT SER-577</scope>
    <scope>IDENTIFICATION BY MASS SPECTROMETRY [LARGE SCALE ANALYSIS]</scope>
    <source>
        <tissue>Liver</tissue>
    </source>
</reference>
<reference key="38">
    <citation type="journal article" date="2014" name="Nucleic Acids Res.">
        <title>PARP3 affects the relative contribution of homologous recombination and nonhomologous end-joining pathways.</title>
        <authorList>
            <person name="Beck C."/>
            <person name="Boehler C."/>
            <person name="Guirouilh Barbat J."/>
            <person name="Bonnet M.E."/>
            <person name="Illuzzi G."/>
            <person name="Ronde P."/>
            <person name="Gauthier L.R."/>
            <person name="Magroun N."/>
            <person name="Rajendran A."/>
            <person name="Lopez B.S."/>
            <person name="Scully R."/>
            <person name="Boussin F.D."/>
            <person name="Schreiber V."/>
            <person name="Dantzer F."/>
        </authorList>
    </citation>
    <scope>ADP-RIBOSYLATION</scope>
</reference>
<reference key="39">
    <citation type="journal article" date="2014" name="Proc. Natl. Acad. Sci. U.S.A.">
        <title>Mapping of SUMO sites and analysis of SUMOylation changes induced by external stimuli.</title>
        <authorList>
            <person name="Impens F."/>
            <person name="Radoshevich L."/>
            <person name="Cossart P."/>
            <person name="Ribet D."/>
        </authorList>
    </citation>
    <scope>SUMOYLATION [LARGE SCALE ANALYSIS] AT LYS-568</scope>
    <scope>IDENTIFICATION BY MASS SPECTROMETRY [LARGE SCALE ANALYSIS]</scope>
</reference>
<reference key="40">
    <citation type="journal article" date="2015" name="Cardiovasc. Res.">
        <title>DNA-dependent protein kinase (DNA-PK) permits vascular smooth muscle cell proliferation through phosphorylation of the orphan nuclear receptor NOR1.</title>
        <authorList>
            <person name="Medunjanin S."/>
            <person name="Daniel J.M."/>
            <person name="Weinert S."/>
            <person name="Dutzmann J."/>
            <person name="Burgbacher F."/>
            <person name="Brecht S."/>
            <person name="Bruemmer D."/>
            <person name="Kaehne T."/>
            <person name="Naumann M."/>
            <person name="Sedding D.G."/>
            <person name="Zuschratter W."/>
            <person name="Braun-Dullaeus R.C."/>
        </authorList>
    </citation>
    <scope>INTERACTION WITH NR4A3</scope>
</reference>
<reference key="41">
    <citation type="journal article" date="2015" name="Cell Death Differ.">
        <title>XLS (c9orf142) is a new component of mammalian DNA double-stranded break repair.</title>
        <authorList>
            <person name="Craxton A."/>
            <person name="Somers J."/>
            <person name="Munnur D."/>
            <person name="Jukes-Jones R."/>
            <person name="Cain K."/>
            <person name="Malewicz M."/>
        </authorList>
    </citation>
    <scope>SUBUNIT</scope>
</reference>
<reference key="42">
    <citation type="journal article" date="2015" name="Nat. Commun.">
        <title>Interactome analysis identifies a new paralogue of XRCC4 in non-homologous end joining DNA repair pathway.</title>
        <authorList>
            <person name="Xing M."/>
            <person name="Yang M."/>
            <person name="Huo W."/>
            <person name="Feng F."/>
            <person name="Wei L."/>
            <person name="Jiang W."/>
            <person name="Ning S."/>
            <person name="Yan Z."/>
            <person name="Li W."/>
            <person name="Wang Q."/>
            <person name="Hou M."/>
            <person name="Dong C."/>
            <person name="Guo R."/>
            <person name="Gao G."/>
            <person name="Ji J."/>
            <person name="Zha S."/>
            <person name="Lan L."/>
            <person name="Liang H."/>
            <person name="Xu D."/>
        </authorList>
    </citation>
    <scope>SUBUNIT</scope>
</reference>
<reference key="43">
    <citation type="journal article" date="2015" name="Oncotarget">
        <title>Heat shock factor 1, an inhibitor of non-homologous end joining repair.</title>
        <authorList>
            <person name="Kang G.Y."/>
            <person name="Kim E.H."/>
            <person name="Lee H.J."/>
            <person name="Gil N.Y."/>
            <person name="Cha H.J."/>
            <person name="Lee Y.S."/>
        </authorList>
    </citation>
    <scope>INTERACTION WITH HSF1</scope>
</reference>
<reference key="44">
    <citation type="journal article" date="2015" name="PLoS ONE">
        <title>Identification of Novel Proteins Co-Purifying with Cockayne Syndrome Group B (CSB) Reveals Potential Roles for CSB in RNA Metabolism and Chromatin Dynamics.</title>
        <authorList>
            <person name="Nicolai S."/>
            <person name="Filippi S."/>
            <person name="Caputo M."/>
            <person name="Cipak L."/>
            <person name="Gregan J."/>
            <person name="Ammerer G."/>
            <person name="Frontini M."/>
            <person name="Willems D."/>
            <person name="Prantera G."/>
            <person name="Balajee A.S."/>
            <person name="Proietti-De-Santis L."/>
        </authorList>
    </citation>
    <scope>INTERACTION WITH ERCC6</scope>
</reference>
<reference key="45">
    <citation type="journal article" date="2015" name="Proteomics">
        <title>N-terminome analysis of the human mitochondrial proteome.</title>
        <authorList>
            <person name="Vaca Jacome A.S."/>
            <person name="Rabilloud T."/>
            <person name="Schaeffer-Reiss C."/>
            <person name="Rompais M."/>
            <person name="Ayoub D."/>
            <person name="Lane L."/>
            <person name="Bairoch A."/>
            <person name="Van Dorsselaer A."/>
            <person name="Carapito C."/>
        </authorList>
    </citation>
    <scope>IDENTIFICATION BY MASS SPECTROMETRY [LARGE SCALE ANALYSIS]</scope>
</reference>
<reference key="46">
    <citation type="journal article" date="2015" name="Science">
        <title>DNA repair. PAXX, a paralog of XRCC4 and XLF, interacts with Ku to promote DNA double-strand break repair.</title>
        <authorList>
            <person name="Ochi T."/>
            <person name="Blackford A.N."/>
            <person name="Coates J."/>
            <person name="Jhujh S."/>
            <person name="Mehmood S."/>
            <person name="Tamura N."/>
            <person name="Travers J."/>
            <person name="Wu Q."/>
            <person name="Draviam V.M."/>
            <person name="Robinson C.V."/>
            <person name="Blundell T.L."/>
            <person name="Jackson S.P."/>
        </authorList>
    </citation>
    <scope>INTERACTION WITH PAXX</scope>
</reference>
<reference key="47">
    <citation type="journal article" date="2015" name="Nat. Cell Biol.">
        <title>The RNF138 E3 ligase displaces Ku to promote DNA end resection and regulate DNA repair pathway choice.</title>
        <authorList>
            <person name="Ismail I.H."/>
            <person name="Gagne J.P."/>
            <person name="Genois M.M."/>
            <person name="Strickfaden H."/>
            <person name="McDonald D."/>
            <person name="Xu Z."/>
            <person name="Poirier G.G."/>
            <person name="Masson J.Y."/>
            <person name="Hendzel M.J."/>
        </authorList>
    </citation>
    <scope>UBIQUITINATION</scope>
    <scope>INTERACTION WITH RNF138</scope>
</reference>
<reference key="48">
    <citation type="journal article" date="2016" name="Cell Rep.">
        <title>Specific roles of XRCC4 paralogs PAXX and XLF during V(D)J recombination.</title>
        <authorList>
            <person name="Lescale C."/>
            <person name="Lenden Hasse H."/>
            <person name="Blackford A.N."/>
            <person name="Balmus G."/>
            <person name="Bianchi J.J."/>
            <person name="Yu W."/>
            <person name="Bacoccina L."/>
            <person name="Jarade A."/>
            <person name="Clouin C."/>
            <person name="Sivapalan R."/>
            <person name="Reina-San-Martin B."/>
            <person name="Jackson S.P."/>
            <person name="Deriano L."/>
        </authorList>
    </citation>
    <scope>INTERACTION WITH PAXX</scope>
</reference>
<reference key="49">
    <citation type="journal article" date="2017" name="Mol. Cell">
        <title>HEXIM1 and NEAT1 Long non-coding RNA form a multi-subunit complex that regulates DNA-mediated innate immune response.</title>
        <authorList>
            <person name="Morchikh M."/>
            <person name="Cribier A."/>
            <person name="Raffel R."/>
            <person name="Amraoui S."/>
            <person name="Cau J."/>
            <person name="Severac D."/>
            <person name="Dubois E."/>
            <person name="Schwartz O."/>
            <person name="Bennasser Y."/>
            <person name="Benkirane M."/>
        </authorList>
    </citation>
    <scope>FUNCTION</scope>
    <scope>INTERACTION WITH PRKDC; HEXIM1; XRCC6; SFPQ; NONO; PSPC1; RBM14 AND MATR3</scope>
</reference>
<reference key="50">
    <citation type="journal article" date="2017" name="Nat. Struct. Mol. Biol.">
        <title>Site-specific mapping of the human SUMO proteome reveals co-modification with phosphorylation.</title>
        <authorList>
            <person name="Hendriks I.A."/>
            <person name="Lyon D."/>
            <person name="Young C."/>
            <person name="Jensen L.J."/>
            <person name="Vertegaal A.C."/>
            <person name="Nielsen M.L."/>
        </authorList>
    </citation>
    <scope>SUMOYLATION [LARGE SCALE ANALYSIS] AT LYS-195; LYS-532; LYS-534; LYS-566; LYS-568; LYS-669 AND LYS-688</scope>
    <scope>IDENTIFICATION BY MASS SPECTROMETRY [LARGE SCALE ANALYSIS]</scope>
</reference>
<reference key="51">
    <citation type="journal article" date="2017" name="Nature">
        <title>Regulation of DNA repair pathway choice in S and G2 phases by the NHEJ inhibitor CYREN.</title>
        <authorList>
            <person name="Arnoult N."/>
            <person name="Correia A."/>
            <person name="Ma J."/>
            <person name="Merlo A."/>
            <person name="Garcia-Gomez S."/>
            <person name="Maric M."/>
            <person name="Tognetti M."/>
            <person name="Benner C.W."/>
            <person name="Boulton S.J."/>
            <person name="Saghatelian A."/>
            <person name="Karlseder J."/>
        </authorList>
    </citation>
    <scope>INTERACTION WITH CYREN</scope>
</reference>
<reference key="52">
    <citation type="journal article" date="2018" name="J. Virol.">
        <title>non-homologous end joining (NHEJ).</title>
        <authorList>
            <person name="Rushing A.W."/>
            <person name="Hoang K."/>
            <person name="Polakowski N."/>
            <person name="Lemasson I."/>
        </authorList>
    </citation>
    <scope>INTERACTION WITH HUMAN T-CELL LEUKEMIA VIRUS 1/HTLV-1 PROTEIN HBZ (MICROBIAL INFECTION)</scope>
</reference>
<reference key="53">
    <citation type="journal article" date="2018" name="Nucleic Acids Res.">
        <title>ATF7 mediates TNF-alpha-induced telomere shortening.</title>
        <authorList>
            <person name="Maekawa T."/>
            <person name="Liu B."/>
            <person name="Nakai D."/>
            <person name="Yoshida K."/>
            <person name="Nakamura K.I."/>
            <person name="Yasukawa M."/>
            <person name="Koike M."/>
            <person name="Takubo K."/>
            <person name="Chatton B."/>
            <person name="Ishikawa F."/>
            <person name="Masutomi K."/>
            <person name="Ishii S."/>
        </authorList>
    </citation>
    <scope>INTERACTION WITH ATF7</scope>
</reference>
<reference key="54">
    <citation type="journal article" date="2020" name="DNA Repair">
        <title>Ligand binding characteristics of the Ku80 von Willebrand domain.</title>
        <authorList>
            <person name="Kim K."/>
            <person name="Min J."/>
            <person name="Kirby T.W."/>
            <person name="Gabel S.A."/>
            <person name="Pedersen L.C."/>
            <person name="London R.E."/>
        </authorList>
    </citation>
    <scope>INTERACTION WITH APLF</scope>
</reference>
<reference key="55">
    <citation type="journal article" date="2020" name="Nature">
        <title>DNA-PKcs has KU-dependent function in rRNA processing and haematopoiesis.</title>
        <authorList>
            <person name="Shao Z."/>
            <person name="Flynn R.A."/>
            <person name="Crowe J.L."/>
            <person name="Zhu Y."/>
            <person name="Liang J."/>
            <person name="Jiang W."/>
            <person name="Aryan F."/>
            <person name="Aoude P."/>
            <person name="Bertozzi C.R."/>
            <person name="Estes V.M."/>
            <person name="Lee B.J."/>
            <person name="Bhagat G."/>
            <person name="Zha S."/>
            <person name="Calo E."/>
        </authorList>
    </citation>
    <scope>FUNCTION</scope>
    <scope>SUBCELLULAR LOCATION</scope>
</reference>
<reference key="56">
    <citation type="journal article" date="2001" name="Nature">
        <title>Structure of the Ku heterodimer bound to DNA and its implications for double-strand break repair.</title>
        <authorList>
            <person name="Walker J.R."/>
            <person name="Corpina R.A."/>
            <person name="Goldberg J."/>
        </authorList>
    </citation>
    <scope>X-RAY CRYSTALLOGRAPHY (2.7 ANGSTROMS) OF 7-565 IN COMPLEX WITH XRCC6</scope>
    <scope>FUNCTION</scope>
</reference>
<reference evidence="48 49" key="57">
    <citation type="journal article" date="2021" name="Mol. Cell">
        <title>Cryo-EM of NHEJ supercomplexes provides insights into DNA repair.</title>
        <authorList>
            <person name="Chaplin A.K."/>
            <person name="Hardwick S.W."/>
            <person name="Stavridi A.K."/>
            <person name="Buehl C.J."/>
            <person name="Goff N.J."/>
            <person name="Ropars V."/>
            <person name="Liang S."/>
            <person name="De Oliveira T.M."/>
            <person name="Chirgadze D.Y."/>
            <person name="Meek K."/>
            <person name="Charbonnier J.B."/>
            <person name="Blundell T.L."/>
        </authorList>
    </citation>
    <scope>STRUCTURE BY ELECTRON MICROSCOPY (4.14 ANGSTROMS) IN COMPLEX WITH THE NHEJ COMPLEX AND DNA</scope>
    <scope>IDENTIFICATION IN THE NHEJ COMPLEX</scope>
</reference>
<reference evidence="46 47" key="58">
    <citation type="journal article" date="2021" name="Nature">
        <title>Structural basis of long-range to short-range synaptic transition in NHEJ.</title>
        <authorList>
            <person name="Chen S."/>
            <person name="Lee L."/>
            <person name="Naila T."/>
            <person name="Fishbain S."/>
            <person name="Wang A."/>
            <person name="Tomkinson A.E."/>
            <person name="Lees-Miller S.P."/>
            <person name="He Y."/>
        </authorList>
    </citation>
    <scope>STRUCTURE BY ELECTRON MICROSCOPY (4.6 ANGSTROMS) IN COMPLEX WITH THE NHEJ COMPLEX</scope>
    <scope>IDENTIFICATION IN THE NHEJ COMPLEX</scope>
</reference>
<reference key="59">
    <citation type="journal article" date="2004" name="Mol. Cell">
        <title>Acetylation of the C terminus of Ku70 by CBP and PCAF controls Bax-mediated apoptosis.</title>
        <authorList>
            <person name="Cohen H.Y."/>
            <person name="Lavu S."/>
            <person name="Bitterman K.J."/>
            <person name="Hekking B."/>
            <person name="Imahiyerobo T.A."/>
            <person name="Miller C."/>
            <person name="Frye R."/>
            <person name="Ploegh H."/>
            <person name="Kessler B.M."/>
            <person name="Sinclair D.A."/>
        </authorList>
    </citation>
    <scope>SUBCELLULAR LOCATION</scope>
</reference>
<reference key="60">
    <citation type="journal article" date="2022" name="Cell Rep.">
        <title>SETD4-mediated KU70 methylation suppresses apoptosis.</title>
        <authorList>
            <person name="Wang Y."/>
            <person name="Liu B."/>
            <person name="Lu H."/>
            <person name="Liu J."/>
            <person name="Romanienko P.J."/>
            <person name="Montelione G.T."/>
            <person name="Shen Z."/>
        </authorList>
    </citation>
    <scope>INTERACTION WITH XRCC6</scope>
</reference>
<name>XRCC5_HUMAN</name>
<organism>
    <name type="scientific">Homo sapiens</name>
    <name type="common">Human</name>
    <dbReference type="NCBI Taxonomy" id="9606"/>
    <lineage>
        <taxon>Eukaryota</taxon>
        <taxon>Metazoa</taxon>
        <taxon>Chordata</taxon>
        <taxon>Craniata</taxon>
        <taxon>Vertebrata</taxon>
        <taxon>Euteleostomi</taxon>
        <taxon>Mammalia</taxon>
        <taxon>Eutheria</taxon>
        <taxon>Euarchontoglires</taxon>
        <taxon>Primates</taxon>
        <taxon>Haplorrhini</taxon>
        <taxon>Catarrhini</taxon>
        <taxon>Hominidae</taxon>
        <taxon>Homo</taxon>
    </lineage>
</organism>
<gene>
    <name type="primary">XRCC5</name>
    <name type="synonym">G22P2</name>
</gene>
<sequence>MVRSGNKAAVVLCMDVGFTMSNSIPGIESPFEQAKKVITMFVQRQVFAENKDEIALVLFGTDGTDNPLSGGDQYQNITVHRHLMLPDFDLLEDIESKIQPGSQQADFLDALIVSMDVIQHETIGKKFEKRHIEIFTDLSSRFSKSQLDIIIHSLKKCDISLQFFLPFSLGKEDGSGDRGDGPFRLGGHGPSFPLKGITEQQKEGLEIVKMVMISLEGEDGLDEIYSFSESLRKLCVFKKIERHSIHWPCRLTIGSNLSIRIAAYKSILQERVKKTWTVVDAKTLKKEDIQKETVYCLNDDDETEVLKEDIIQGFRYGSDIVPFSKVDEEQMKYKSEGKCFSVLGFCKSSQVQRRFFMGNQVLKVFAARDDEAAAVALSSLIHALDDLDMVAIVRYAYDKRANPQVGVAFPHIKHNYECLVYVQLPFMEDLRQYMFSSLKNSKKYAPTEAQLNAVDALIDSMSLAKKDEKTDTLEDLFPTTKIPNPRFQRLFQCLLHRALHPREPLPPIQQHIWNMLNPPAEVTTKSQIPLSKIKTLFPLIEAKKKDQVTAQEIFQDNHEDGPTAKKLKTEQGGAHFSVSSLAEGSVTSVGSVNPAENFRVLVKQKKASFEEASNQLINHIEQFLDTNETPYFMKSIDCIRAFREEAIKFSEEQRFNNFLKALQEKVEIKQLNHFWEIVVQDGITLITKEEASGSSVTAEEAKKFLAPKDKPSGDTAAVFEEGGDVDDLLDMI</sequence>